<evidence type="ECO:0000255" key="1"/>
<evidence type="ECO:0000255" key="2">
    <source>
        <dbReference type="PROSITE-ProRule" id="PRU01142"/>
    </source>
</evidence>
<evidence type="ECO:0000256" key="3">
    <source>
        <dbReference type="SAM" id="MobiDB-lite"/>
    </source>
</evidence>
<evidence type="ECO:0000269" key="4">
    <source>
    </source>
</evidence>
<evidence type="ECO:0000269" key="5">
    <source>
    </source>
</evidence>
<evidence type="ECO:0000269" key="6">
    <source>
    </source>
</evidence>
<evidence type="ECO:0000269" key="7">
    <source>
    </source>
</evidence>
<evidence type="ECO:0000269" key="8">
    <source>
    </source>
</evidence>
<evidence type="ECO:0000269" key="9">
    <source>
    </source>
</evidence>
<evidence type="ECO:0000269" key="10">
    <source>
    </source>
</evidence>
<evidence type="ECO:0000269" key="11">
    <source>
    </source>
</evidence>
<evidence type="ECO:0000269" key="12">
    <source>
    </source>
</evidence>
<evidence type="ECO:0000269" key="13">
    <source>
    </source>
</evidence>
<evidence type="ECO:0000269" key="14">
    <source>
    </source>
</evidence>
<evidence type="ECO:0000269" key="15">
    <source>
    </source>
</evidence>
<evidence type="ECO:0000269" key="16">
    <source>
    </source>
</evidence>
<evidence type="ECO:0000269" key="17">
    <source>
    </source>
</evidence>
<evidence type="ECO:0000269" key="18">
    <source>
    </source>
</evidence>
<evidence type="ECO:0000269" key="19">
    <source>
    </source>
</evidence>
<evidence type="ECO:0000269" key="20">
    <source>
    </source>
</evidence>
<evidence type="ECO:0000269" key="21">
    <source>
    </source>
</evidence>
<evidence type="ECO:0000269" key="22">
    <source>
    </source>
</evidence>
<evidence type="ECO:0000269" key="23">
    <source>
    </source>
</evidence>
<evidence type="ECO:0000269" key="24">
    <source>
    </source>
</evidence>
<evidence type="ECO:0000269" key="25">
    <source>
    </source>
</evidence>
<evidence type="ECO:0000269" key="26">
    <source>
    </source>
</evidence>
<evidence type="ECO:0000269" key="27">
    <source>
    </source>
</evidence>
<evidence type="ECO:0000269" key="28">
    <source>
    </source>
</evidence>
<evidence type="ECO:0000269" key="29">
    <source>
    </source>
</evidence>
<evidence type="ECO:0000269" key="30">
    <source>
    </source>
</evidence>
<evidence type="ECO:0000269" key="31">
    <source>
    </source>
</evidence>
<evidence type="ECO:0000269" key="32">
    <source>
    </source>
</evidence>
<evidence type="ECO:0000269" key="33">
    <source>
    </source>
</evidence>
<evidence type="ECO:0000269" key="34">
    <source>
    </source>
</evidence>
<evidence type="ECO:0000269" key="35">
    <source>
    </source>
</evidence>
<evidence type="ECO:0000269" key="36">
    <source>
    </source>
</evidence>
<evidence type="ECO:0000269" key="37">
    <source>
    </source>
</evidence>
<evidence type="ECO:0000269" key="38">
    <source>
    </source>
</evidence>
<evidence type="ECO:0000269" key="39">
    <source ref="3"/>
</evidence>
<evidence type="ECO:0000303" key="40">
    <source>
    </source>
</evidence>
<evidence type="ECO:0000303" key="41">
    <source>
    </source>
</evidence>
<evidence type="ECO:0000303" key="42">
    <source>
    </source>
</evidence>
<evidence type="ECO:0000305" key="43"/>
<evidence type="ECO:0000312" key="44">
    <source>
        <dbReference type="Proteomes" id="UP000005640"/>
    </source>
</evidence>
<evidence type="ECO:0007744" key="45">
    <source>
    </source>
</evidence>
<evidence type="ECO:0007744" key="46">
    <source>
    </source>
</evidence>
<evidence type="ECO:0007829" key="47">
    <source>
        <dbReference type="PDB" id="2LO4"/>
    </source>
</evidence>
<evidence type="ECO:0007829" key="48">
    <source>
        <dbReference type="PDB" id="5AAZ"/>
    </source>
</evidence>
<evidence type="ECO:0007829" key="49">
    <source>
        <dbReference type="PDB" id="5EOF"/>
    </source>
</evidence>
<evidence type="ECO:0007829" key="50">
    <source>
        <dbReference type="PDB" id="7CZM"/>
    </source>
</evidence>
<evidence type="ECO:0007829" key="51">
    <source>
        <dbReference type="PDB" id="9B0Z"/>
    </source>
</evidence>
<gene>
    <name type="primary">OPTN</name>
    <name evidence="42" type="synonym">FIP2</name>
    <name type="synonym">GLC1E</name>
    <name type="synonym">HIP7</name>
    <name type="synonym">HYPL</name>
    <name evidence="40" type="synonym">NRP</name>
</gene>
<name>OPTN_HUMAN</name>
<comment type="function">
    <text evidence="7 18 20 21 24 25 32 33">Plays an important role in the maintenance of the Golgi complex, in membrane trafficking, in exocytosis, through its interaction with myosin VI and Rab8 (PubMed:27534431). Links myosin VI to the Golgi complex and plays an important role in Golgi ribbon formation (PubMed:27534431). Plays a role in the activation of innate immune response during viral infection. Mechanistically, recruits TBK1 at the Golgi apparatus, promoting its trans-phosphorylation after RLR or TLR3 stimulation (PubMed:27538435). In turn, activated TBK1 phosphorylates its downstream partner IRF3 to produce IFN-beta/IFNB1. Plays a neuroprotective role in the eye and optic nerve. May act by regulating membrane trafficking and cellular morphogenesis via a complex that contains Rab8 and huntingtin (HD). Mediates the interaction of Rab8 with the probable GTPase-activating protein TBC1D17 during Rab8-mediated endocytic trafficking, such as that of transferrin receptor (TFRC/TfR); regulates Rab8 recruitment to tubules emanating from the endocytic recycling compartment (PubMed:22854040). Autophagy receptor that interacts directly with both the cargo to become degraded and an autophagy modifier of the MAP1 LC3 family; targets ubiquitin-coated bacteria (xenophagy), such as cytoplasmic Salmonella enterica, and appears to function in the same pathway as SQSTM1 and CALCOCO2/NDP52.</text>
</comment>
<comment type="function">
    <text evidence="21 33 37">(Microbial infection) May constitute a cellular target for various viruses, such as adenovirus E3 14.7 or Bluetongue virus, to inhibit innate immune response (PubMed:27538435, PubMed:9488477). During RNA virus infection, such as that of Sendai virus, negatively regulates the induction of IFNB1 (PubMed:20174559).</text>
</comment>
<comment type="subunit">
    <text evidence="4 6 18 20 21 24 25 26 27 28 30 33 34 35 36 38">Self-associates (PubMed:23669351). Interacts with HD (PubMed:11137014, PubMed:9700202). Interacts with GTF3A (PubMed:10756201). Interacts with MYO6 (PubMed:31371777). Interacts (via UBAN) with ubiquitinated TFRC (PubMed:20085643). Interacts with GTP-bound Rab8 (RAB8A and/or RAB8B) (PubMed:11137014, PubMed:20085643, PubMed:22854040). Interacts with TBC1D17 (PubMed:22854040). Interacts with TBK1 (PubMed:20174559, PubMed:23669351, PubMed:27538435). Interacts with TRAF3 (PubMed:20174559). Binds to linear ubiquitin chains (PubMed:20085643). Interacts with LC3 family members MAP1LC3A, MAP1LC3B, GABARAP, GABARAPL1 and GABARAPL2; OPTN phosphorylation increases the association (at least with MAP1LC3B). Interacts with RAB12; the interaction may be indirect. Interacts with TBK1; this interaction leads to the Golgi localization of TBK1 and its subsequent activation. Interacts with palmitoyltransferase ZDHHC17/HIP14; the interaction does not lead to palmitoylation of OPTN (PubMed:24705354). Interacts with CYLD (PubMed:32185393). Interacts with TOM1; the interaction is indirect and is mediated by MYO6, which acts as a bridge between TOM1 and OPTN (PubMed:31371777). Interacts with USP12; the interaction is independent of USP12 deubiquitinase activity and may be involved in regulation of autophagic flux (PubMed:30266909).</text>
</comment>
<comment type="subunit">
    <text evidence="33 37">(Microbial infection) Interacts with E3 14.7 kDa protein of group C human adenovirus (PubMed:9488477). Interacts with Bluetongue virus protein NS3 (PubMed:27538435).</text>
</comment>
<comment type="interaction">
    <interactant intactId="EBI-748974">
        <id>Q96CV9</id>
    </interactant>
    <interactant intactId="EBI-22011868">
        <id>Q6PCB6</id>
        <label>ABHD17C</label>
    </interactant>
    <organismsDiffer>false</organismsDiffer>
    <experiments>3</experiments>
</comment>
<comment type="interaction">
    <interactant intactId="EBI-748974">
        <id>Q96CV9</id>
    </interactant>
    <interactant intactId="EBI-25910301">
        <id>P24666-2</id>
        <label>ACP1</label>
    </interactant>
    <organismsDiffer>false</organismsDiffer>
    <experiments>3</experiments>
</comment>
<comment type="interaction">
    <interactant intactId="EBI-748974">
        <id>Q96CV9</id>
    </interactant>
    <interactant intactId="EBI-3921478">
        <id>Q9H6R3</id>
        <label>ACSS3</label>
    </interactant>
    <organismsDiffer>false</organismsDiffer>
    <experiments>3</experiments>
</comment>
<comment type="interaction">
    <interactant intactId="EBI-748974">
        <id>Q96CV9</id>
    </interactant>
    <interactant intactId="EBI-25838028">
        <id>Q8N302-2</id>
        <label>AGGF1</label>
    </interactant>
    <organismsDiffer>false</organismsDiffer>
    <experiments>3</experiments>
</comment>
<comment type="interaction">
    <interactant intactId="EBI-748974">
        <id>Q96CV9</id>
    </interactant>
    <interactant intactId="EBI-12412735">
        <id>Q12904-2</id>
        <label>AIMP1</label>
    </interactant>
    <organismsDiffer>false</organismsDiffer>
    <experiments>6</experiments>
</comment>
<comment type="interaction">
    <interactant intactId="EBI-748974">
        <id>Q96CV9</id>
    </interactant>
    <interactant intactId="EBI-22011535">
        <id>Q5TZF3-1</id>
        <label>ANKRD45</label>
    </interactant>
    <organismsDiffer>false</organismsDiffer>
    <experiments>3</experiments>
</comment>
<comment type="interaction">
    <interactant intactId="EBI-748974">
        <id>Q96CV9</id>
    </interactant>
    <interactant intactId="EBI-296601">
        <id>P08758</id>
        <label>ANXA5</label>
    </interactant>
    <organismsDiffer>false</organismsDiffer>
    <experiments>3</experiments>
</comment>
<comment type="interaction">
    <interactant intactId="EBI-748974">
        <id>Q96CV9</id>
    </interactant>
    <interactant intactId="EBI-1044383">
        <id>O00203</id>
        <label>AP3B1</label>
    </interactant>
    <organismsDiffer>false</organismsDiffer>
    <experiments>3</experiments>
</comment>
<comment type="interaction">
    <interactant intactId="EBI-748974">
        <id>Q96CV9</id>
    </interactant>
    <interactant intactId="EBI-10186132">
        <id>Q0P5N6</id>
        <label>ARL16</label>
    </interactant>
    <organismsDiffer>false</organismsDiffer>
    <experiments>3</experiments>
</comment>
<comment type="interaction">
    <interactant intactId="EBI-748974">
        <id>Q96CV9</id>
    </interactant>
    <interactant intactId="EBI-2875665">
        <id>Q96B67</id>
        <label>ARRDC3</label>
    </interactant>
    <organismsDiffer>false</organismsDiffer>
    <experiments>3</experiments>
</comment>
<comment type="interaction">
    <interactant intactId="EBI-748974">
        <id>Q96CV9</id>
    </interactant>
    <interactant intactId="EBI-25911000">
        <id>Q9Y574-2</id>
        <label>ASB4</label>
    </interactant>
    <organismsDiffer>false</organismsDiffer>
    <experiments>3</experiments>
</comment>
<comment type="interaction">
    <interactant intactId="EBI-748974">
        <id>Q96CV9</id>
    </interactant>
    <interactant intactId="EBI-10254793">
        <id>Q6XD76</id>
        <label>ASCL4</label>
    </interactant>
    <organismsDiffer>false</organismsDiffer>
    <experiments>3</experiments>
</comment>
<comment type="interaction">
    <interactant intactId="EBI-748974">
        <id>Q96CV9</id>
    </interactant>
    <interactant intactId="EBI-743231">
        <id>O95671</id>
        <label>ASMTL</label>
    </interactant>
    <organismsDiffer>false</organismsDiffer>
    <experiments>3</experiments>
</comment>
<comment type="interaction">
    <interactant intactId="EBI-748974">
        <id>Q96CV9</id>
    </interactant>
    <interactant intactId="EBI-2410266">
        <id>Q8WXF7</id>
        <label>ATL1</label>
    </interactant>
    <organismsDiffer>false</organismsDiffer>
    <experiments>3</experiments>
</comment>
<comment type="interaction">
    <interactant intactId="EBI-748974">
        <id>Q96CV9</id>
    </interactant>
    <interactant intactId="EBI-742722">
        <id>Q9BUH8</id>
        <label>BEGAIN</label>
    </interactant>
    <organismsDiffer>false</organismsDiffer>
    <experiments>3</experiments>
</comment>
<comment type="interaction">
    <interactant intactId="EBI-748974">
        <id>Q96CV9</id>
    </interactant>
    <interactant intactId="EBI-518823">
        <id>O15392</id>
        <label>BIRC5</label>
    </interactant>
    <organismsDiffer>false</organismsDiffer>
    <experiments>3</experiments>
</comment>
<comment type="interaction">
    <interactant intactId="EBI-748974">
        <id>Q96CV9</id>
    </interactant>
    <interactant intactId="EBI-10693038">
        <id>Q9NSI6-4</id>
        <label>BRWD1</label>
    </interactant>
    <organismsDiffer>false</organismsDiffer>
    <experiments>3</experiments>
</comment>
<comment type="interaction">
    <interactant intactId="EBI-748974">
        <id>Q96CV9</id>
    </interactant>
    <interactant intactId="EBI-10178113">
        <id>Q96G97-4</id>
        <label>BSCL2</label>
    </interactant>
    <organismsDiffer>false</organismsDiffer>
    <experiments>3</experiments>
</comment>
<comment type="interaction">
    <interactant intactId="EBI-748974">
        <id>Q96CV9</id>
    </interactant>
    <interactant intactId="EBI-17564670">
        <id>P78410</id>
        <label>BTN3A2</label>
    </interactant>
    <organismsDiffer>false</organismsDiffer>
    <experiments>3</experiments>
</comment>
<comment type="interaction">
    <interactant intactId="EBI-748974">
        <id>Q96CV9</id>
    </interactant>
    <interactant intactId="EBI-25911105">
        <id>Q9UIR0-4</id>
        <label>BTNL2</label>
    </interactant>
    <organismsDiffer>false</organismsDiffer>
    <experiments>3</experiments>
</comment>
<comment type="interaction">
    <interactant intactId="EBI-748974">
        <id>Q96CV9</id>
    </interactant>
    <interactant intactId="EBI-25911375">
        <id>Q32M92-2</id>
        <label>C15orf32</label>
    </interactant>
    <organismsDiffer>false</organismsDiffer>
    <experiments>3</experiments>
</comment>
<comment type="interaction">
    <interactant intactId="EBI-748974">
        <id>Q96CV9</id>
    </interactant>
    <interactant intactId="EBI-10226540">
        <id>Q0P5P2</id>
        <label>C17orf67</label>
    </interactant>
    <organismsDiffer>false</organismsDiffer>
    <experiments>3</experiments>
</comment>
<comment type="interaction">
    <interactant intactId="EBI-748974">
        <id>Q96CV9</id>
    </interactant>
    <interactant intactId="EBI-751596">
        <id>Q96LL4</id>
        <label>C8orf48</label>
    </interactant>
    <organismsDiffer>false</organismsDiffer>
    <experiments>3</experiments>
</comment>
<comment type="interaction">
    <interactant intactId="EBI-748974">
        <id>Q96CV9</id>
    </interactant>
    <interactant intactId="EBI-10179719">
        <id>A2RRN7</id>
        <label>CADPS</label>
    </interactant>
    <organismsDiffer>false</organismsDiffer>
    <experiments>3</experiments>
</comment>
<comment type="interaction">
    <interactant intactId="EBI-748974">
        <id>Q96CV9</id>
    </interactant>
    <interactant intactId="EBI-1542113">
        <id>P07384</id>
        <label>CAPN1</label>
    </interactant>
    <organismsDiffer>false</organismsDiffer>
    <experiments>3</experiments>
</comment>
<comment type="interaction">
    <interactant intactId="EBI-748974">
        <id>Q96CV9</id>
    </interactant>
    <interactant intactId="EBI-10961312">
        <id>Q8IYE1</id>
        <label>CCDC13</label>
    </interactant>
    <organismsDiffer>false</organismsDiffer>
    <experiments>3</experiments>
</comment>
<comment type="interaction">
    <interactant intactId="EBI-748974">
        <id>Q96CV9</id>
    </interactant>
    <interactant intactId="EBI-396137">
        <id>Q9UJX2</id>
        <label>CDC23</label>
    </interactant>
    <organismsDiffer>false</organismsDiffer>
    <experiments>8</experiments>
</comment>
<comment type="interaction">
    <interactant intactId="EBI-748974">
        <id>Q96CV9</id>
    </interactant>
    <interactant intactId="EBI-1751979">
        <id>P49450</id>
        <label>CENPA</label>
    </interactant>
    <organismsDiffer>false</organismsDiffer>
    <experiments>3</experiments>
</comment>
<comment type="interaction">
    <interactant intactId="EBI-748974">
        <id>Q96CV9</id>
    </interactant>
    <interactant intactId="EBI-1053100">
        <id>Q9BV73</id>
        <label>CEP250</label>
    </interactant>
    <organismsDiffer>false</organismsDiffer>
    <experiments>3</experiments>
</comment>
<comment type="interaction">
    <interactant intactId="EBI-748974">
        <id>Q96CV9</id>
    </interactant>
    <interactant intactId="EBI-739498">
        <id>Q9P209</id>
        <label>CEP72</label>
    </interactant>
    <organismsDiffer>false</organismsDiffer>
    <experiments>3</experiments>
</comment>
<comment type="interaction">
    <interactant intactId="EBI-748974">
        <id>Q96CV9</id>
    </interactant>
    <interactant intactId="EBI-352733">
        <id>P23528</id>
        <label>CFL1</label>
    </interactant>
    <organismsDiffer>false</organismsDiffer>
    <experiments>3</experiments>
</comment>
<comment type="interaction">
    <interactant intactId="EBI-748974">
        <id>Q96CV9</id>
    </interactant>
    <interactant intactId="EBI-6660184">
        <id>Q3SX64</id>
        <label>CIMAP1D</label>
    </interactant>
    <organismsDiffer>false</organismsDiffer>
    <experiments>3</experiments>
</comment>
<comment type="interaction">
    <interactant intactId="EBI-748974">
        <id>Q96CV9</id>
    </interactant>
    <interactant intactId="EBI-12208021">
        <id>Q8TBE1</id>
        <label>CNIH3</label>
    </interactant>
    <organismsDiffer>false</organismsDiffer>
    <experiments>3</experiments>
</comment>
<comment type="interaction">
    <interactant intactId="EBI-748974">
        <id>Q96CV9</id>
    </interactant>
    <interactant intactId="EBI-2116369">
        <id>P15169</id>
        <label>CPN1</label>
    </interactant>
    <organismsDiffer>false</organismsDiffer>
    <experiments>3</experiments>
</comment>
<comment type="interaction">
    <interactant intactId="EBI-748974">
        <id>Q96CV9</id>
    </interactant>
    <interactant intactId="EBI-7107048">
        <id>Q14894</id>
        <label>CRYM</label>
    </interactant>
    <organismsDiffer>false</organismsDiffer>
    <experiments>3</experiments>
</comment>
<comment type="interaction">
    <interactant intactId="EBI-748974">
        <id>Q96CV9</id>
    </interactant>
    <interactant intactId="EBI-724310">
        <id>Q15038</id>
        <label>DAZAP2</label>
    </interactant>
    <organismsDiffer>false</organismsDiffer>
    <experiments>6</experiments>
</comment>
<comment type="interaction">
    <interactant intactId="EBI-748974">
        <id>Q96CV9</id>
    </interactant>
    <interactant intactId="EBI-18030204">
        <id>Q9UBT3</id>
        <label>DKK4</label>
    </interactant>
    <organismsDiffer>false</organismsDiffer>
    <experiments>3</experiments>
</comment>
<comment type="interaction">
    <interactant intactId="EBI-748974">
        <id>Q96CV9</id>
    </interactant>
    <interactant intactId="EBI-21529239">
        <id>Q86TI2-2</id>
        <label>DPP9</label>
    </interactant>
    <organismsDiffer>false</organismsDiffer>
    <experiments>3</experiments>
</comment>
<comment type="interaction">
    <interactant intactId="EBI-748974">
        <id>Q96CV9</id>
    </interactant>
    <interactant intactId="EBI-5458011">
        <id>Q96G46</id>
        <label>DUS3L</label>
    </interactant>
    <organismsDiffer>false</organismsDiffer>
    <experiments>3</experiments>
</comment>
<comment type="interaction">
    <interactant intactId="EBI-748974">
        <id>Q96CV9</id>
    </interactant>
    <interactant intactId="EBI-3913907">
        <id>Q9Y5L3</id>
        <label>ENTPD2</label>
    </interactant>
    <organismsDiffer>false</organismsDiffer>
    <experiments>3</experiments>
</comment>
<comment type="interaction">
    <interactant intactId="EBI-748974">
        <id>Q96CV9</id>
    </interactant>
    <interactant intactId="EBI-21567429">
        <id>Q6NXG1-3</id>
        <label>ESRP1</label>
    </interactant>
    <organismsDiffer>false</organismsDiffer>
    <experiments>3</experiments>
</comment>
<comment type="interaction">
    <interactant intactId="EBI-748974">
        <id>Q96CV9</id>
    </interactant>
    <interactant intactId="EBI-9087984">
        <id>Q3KNW7</id>
        <label>FKSG83</label>
    </interactant>
    <organismsDiffer>false</organismsDiffer>
    <experiments>3</experiments>
</comment>
<comment type="interaction">
    <interactant intactId="EBI-748974">
        <id>Q96CV9</id>
    </interactant>
    <interactant intactId="EBI-740459">
        <id>P51116</id>
        <label>FXR2</label>
    </interactant>
    <organismsDiffer>false</organismsDiffer>
    <experiments>3</experiments>
</comment>
<comment type="interaction">
    <interactant intactId="EBI-748974">
        <id>Q96CV9</id>
    </interactant>
    <interactant intactId="EBI-21747962">
        <id>Q8N1C3</id>
        <label>GABRG1</label>
    </interactant>
    <organismsDiffer>false</organismsDiffer>
    <experiments>3</experiments>
</comment>
<comment type="interaction">
    <interactant intactId="EBI-748974">
        <id>Q96CV9</id>
    </interactant>
    <interactant intactId="EBI-12143817">
        <id>Q49A26-4</id>
        <label>GLYR1</label>
    </interactant>
    <organismsDiffer>false</organismsDiffer>
    <experiments>3</experiments>
</comment>
<comment type="interaction">
    <interactant intactId="EBI-748974">
        <id>Q96CV9</id>
    </interactant>
    <interactant intactId="EBI-751540">
        <id>O95872</id>
        <label>GPANK1</label>
    </interactant>
    <organismsDiffer>false</organismsDiffer>
    <experiments>3</experiments>
</comment>
<comment type="interaction">
    <interactant intactId="EBI-748974">
        <id>Q96CV9</id>
    </interactant>
    <interactant intactId="EBI-750650">
        <id>Q71DI3</id>
        <label>H3C15</label>
    </interactant>
    <organismsDiffer>false</organismsDiffer>
    <experiments>3</experiments>
</comment>
<comment type="interaction">
    <interactant intactId="EBI-748974">
        <id>Q96CV9</id>
    </interactant>
    <interactant intactId="EBI-308277">
        <id>Q8IYU2</id>
        <label>HACE1</label>
    </interactant>
    <organismsDiffer>false</organismsDiffer>
    <experiments>15</experiments>
</comment>
<comment type="interaction">
    <interactant intactId="EBI-748974">
        <id>Q96CV9</id>
    </interactant>
    <interactant intactId="EBI-13086076">
        <id>P61296-2</id>
        <label>HAND2</label>
    </interactant>
    <organismsDiffer>false</organismsDiffer>
    <experiments>3</experiments>
</comment>
<comment type="interaction">
    <interactant intactId="EBI-748974">
        <id>Q96CV9</id>
    </interactant>
    <interactant intactId="EBI-301762">
        <id>Q969S8</id>
        <label>HDAC10</label>
    </interactant>
    <organismsDiffer>false</organismsDiffer>
    <experiments>3</experiments>
</comment>
<comment type="interaction">
    <interactant intactId="EBI-748974">
        <id>Q96CV9</id>
    </interactant>
    <interactant intactId="EBI-25910418">
        <id>A0A1C3PI11</id>
        <label>HLA-DPB1</label>
    </interactant>
    <organismsDiffer>false</organismsDiffer>
    <experiments>3</experiments>
</comment>
<comment type="interaction">
    <interactant intactId="EBI-748974">
        <id>Q96CV9</id>
    </interactant>
    <interactant intactId="EBI-2802503">
        <id>P04440</id>
        <label>HLA-DPB1</label>
    </interactant>
    <organismsDiffer>false</organismsDiffer>
    <experiments>3</experiments>
</comment>
<comment type="interaction">
    <interactant intactId="EBI-748974">
        <id>Q96CV9</id>
    </interactant>
    <interactant intactId="EBI-7116203">
        <id>O75031</id>
        <label>HSF2BP</label>
    </interactant>
    <organismsDiffer>false</organismsDiffer>
    <experiments>3</experiments>
</comment>
<comment type="interaction">
    <interactant intactId="EBI-748974">
        <id>Q96CV9</id>
    </interactant>
    <interactant intactId="EBI-1043151">
        <id>P28566</id>
        <label>HTR1E</label>
    </interactant>
    <organismsDiffer>false</organismsDiffer>
    <experiments>3</experiments>
</comment>
<comment type="interaction">
    <interactant intactId="EBI-748974">
        <id>Q96CV9</id>
    </interactant>
    <interactant intactId="EBI-466029">
        <id>P42858</id>
        <label>HTT</label>
    </interactant>
    <organismsDiffer>false</organismsDiffer>
    <experiments>13</experiments>
</comment>
<comment type="interaction">
    <interactant intactId="EBI-748974">
        <id>Q96CV9</id>
    </interactant>
    <interactant intactId="EBI-713456">
        <id>Q13123</id>
        <label>IK</label>
    </interactant>
    <organismsDiffer>false</organismsDiffer>
    <experiments>3</experiments>
</comment>
<comment type="interaction">
    <interactant intactId="EBI-748974">
        <id>Q96CV9</id>
    </interactant>
    <interactant intactId="EBI-20831744">
        <id>Q96RQ9</id>
        <label>IL4I1</label>
    </interactant>
    <organismsDiffer>false</organismsDiffer>
    <experiments>3</experiments>
</comment>
<comment type="interaction">
    <interactant intactId="EBI-748974">
        <id>Q96CV9</id>
    </interactant>
    <interactant intactId="EBI-2866563">
        <id>Q02556</id>
        <label>IRF8</label>
    </interactant>
    <organismsDiffer>false</organismsDiffer>
    <experiments>3</experiments>
</comment>
<comment type="interaction">
    <interactant intactId="EBI-748974">
        <id>Q96CV9</id>
    </interactant>
    <interactant intactId="EBI-20844678">
        <id>A1A4Y4</id>
        <label>IRGM</label>
    </interactant>
    <organismsDiffer>false</organismsDiffer>
    <experiments>3</experiments>
</comment>
<comment type="interaction">
    <interactant intactId="EBI-748974">
        <id>Q96CV9</id>
    </interactant>
    <interactant intactId="EBI-12120084">
        <id>Q6IE81-3</id>
        <label>JADE1</label>
    </interactant>
    <organismsDiffer>false</organismsDiffer>
    <experiments>3</experiments>
</comment>
<comment type="interaction">
    <interactant intactId="EBI-748974">
        <id>Q96CV9</id>
    </interactant>
    <interactant intactId="EBI-17702098">
        <id>Q8IV33</id>
        <label>KIAA0825</label>
    </interactant>
    <organismsDiffer>false</organismsDiffer>
    <experiments>3</experiments>
</comment>
<comment type="interaction">
    <interactant intactId="EBI-748974">
        <id>Q96CV9</id>
    </interactant>
    <interactant intactId="EBI-1044640">
        <id>Q9BYQ4</id>
        <label>KRTAP9-2</label>
    </interactant>
    <organismsDiffer>false</organismsDiffer>
    <experiments>3</experiments>
</comment>
<comment type="interaction">
    <interactant intactId="EBI-748974">
        <id>Q96CV9</id>
    </interactant>
    <interactant intactId="EBI-9088686">
        <id>Q14847-2</id>
        <label>LASP1</label>
    </interactant>
    <organismsDiffer>false</organismsDiffer>
    <experiments>3</experiments>
</comment>
<comment type="interaction">
    <interactant intactId="EBI-748974">
        <id>Q96CV9</id>
    </interactant>
    <interactant intactId="EBI-1108377">
        <id>Q9BYZ2</id>
        <label>LDHAL6B</label>
    </interactant>
    <organismsDiffer>false</organismsDiffer>
    <experiments>3</experiments>
</comment>
<comment type="interaction">
    <interactant intactId="EBI-748974">
        <id>Q96CV9</id>
    </interactant>
    <interactant intactId="EBI-725647">
        <id>Q99732</id>
        <label>LITAF</label>
    </interactant>
    <organismsDiffer>false</organismsDiffer>
    <experiments>3</experiments>
</comment>
<comment type="interaction">
    <interactant intactId="EBI-748974">
        <id>Q96CV9</id>
    </interactant>
    <interactant intactId="EBI-2340947">
        <id>Q8N448</id>
        <label>LNX2</label>
    </interactant>
    <organismsDiffer>false</organismsDiffer>
    <experiments>3</experiments>
</comment>
<comment type="interaction">
    <interactant intactId="EBI-748974">
        <id>Q96CV9</id>
    </interactant>
    <interactant intactId="EBI-9088215">
        <id>A2RU56</id>
        <label>LOC401296</label>
    </interactant>
    <organismsDiffer>false</organismsDiffer>
    <experiments>3</experiments>
</comment>
<comment type="interaction">
    <interactant intactId="EBI-748974">
        <id>Q96CV9</id>
    </interactant>
    <interactant intactId="EBI-744222">
        <id>O60711</id>
        <label>LPXN</label>
    </interactant>
    <organismsDiffer>false</organismsDiffer>
    <experiments>3</experiments>
</comment>
<comment type="interaction">
    <interactant intactId="EBI-748974">
        <id>Q96CV9</id>
    </interactant>
    <interactant intactId="EBI-1189067">
        <id>P51608</id>
        <label>MECP2</label>
    </interactant>
    <organismsDiffer>false</organismsDiffer>
    <experiments>3</experiments>
</comment>
<comment type="interaction">
    <interactant intactId="EBI-748974">
        <id>Q96CV9</id>
    </interactant>
    <interactant intactId="EBI-4397720">
        <id>Q8TDB4</id>
        <label>MGARP</label>
    </interactant>
    <organismsDiffer>false</organismsDiffer>
    <experiments>3</experiments>
</comment>
<comment type="interaction">
    <interactant intactId="EBI-748974">
        <id>Q96CV9</id>
    </interactant>
    <interactant intactId="EBI-725713">
        <id>Q9UQ53</id>
        <label>MGAT4B</label>
    </interactant>
    <organismsDiffer>false</organismsDiffer>
    <experiments>3</experiments>
</comment>
<comment type="interaction">
    <interactant intactId="EBI-748974">
        <id>Q96CV9</id>
    </interactant>
    <interactant intactId="EBI-21250407">
        <id>A4FUJ8</id>
        <label>MKL1</label>
    </interactant>
    <organismsDiffer>false</organismsDiffer>
    <experiments>3</experiments>
</comment>
<comment type="interaction">
    <interactant intactId="EBI-748974">
        <id>Q96CV9</id>
    </interactant>
    <interactant intactId="EBI-73837">
        <id>Q9BUB5</id>
        <label>MKNK1</label>
    </interactant>
    <organismsDiffer>false</organismsDiffer>
    <experiments>3</experiments>
</comment>
<comment type="interaction">
    <interactant intactId="EBI-748974">
        <id>Q96CV9</id>
    </interactant>
    <interactant intactId="EBI-7825413">
        <id>Q96EY8</id>
        <label>MMAB</label>
    </interactant>
    <organismsDiffer>false</organismsDiffer>
    <experiments>3</experiments>
</comment>
<comment type="interaction">
    <interactant intactId="EBI-748974">
        <id>Q96CV9</id>
    </interactant>
    <interactant intactId="EBI-711788">
        <id>Q00013</id>
        <label>MPP1</label>
    </interactant>
    <organismsDiffer>false</organismsDiffer>
    <experiments>2</experiments>
</comment>
<comment type="interaction">
    <interactant intactId="EBI-748974">
        <id>Q96CV9</id>
    </interactant>
    <interactant intactId="EBI-1042890">
        <id>Q9UDX5</id>
        <label>MTFP1</label>
    </interactant>
    <organismsDiffer>false</organismsDiffer>
    <experiments>3</experiments>
</comment>
<comment type="interaction">
    <interactant intactId="EBI-748974">
        <id>Q96CV9</id>
    </interactant>
    <interactant intactId="EBI-12260130">
        <id>Q96EZ4</id>
        <label>MYEOV</label>
    </interactant>
    <organismsDiffer>false</organismsDiffer>
    <experiments>3</experiments>
</comment>
<comment type="interaction">
    <interactant intactId="EBI-748974">
        <id>Q96CV9</id>
    </interactant>
    <interactant intactId="EBI-11057583">
        <id>Q9Y6Q9-5</id>
        <label>NCOA3</label>
    </interactant>
    <organismsDiffer>false</organismsDiffer>
    <experiments>3</experiments>
</comment>
<comment type="interaction">
    <interactant intactId="EBI-748974">
        <id>Q96CV9</id>
    </interactant>
    <interactant intactId="EBI-749003">
        <id>Q9Y221</id>
        <label>NIP7</label>
    </interactant>
    <organismsDiffer>false</organismsDiffer>
    <experiments>3</experiments>
</comment>
<comment type="interaction">
    <interactant intactId="EBI-748974">
        <id>Q96CV9</id>
    </interactant>
    <interactant intactId="EBI-2862643">
        <id>Q9HBL8</id>
        <label>NMRAL1</label>
    </interactant>
    <organismsDiffer>false</organismsDiffer>
    <experiments>3</experiments>
</comment>
<comment type="interaction">
    <interactant intactId="EBI-748974">
        <id>Q96CV9</id>
    </interactant>
    <interactant intactId="EBI-9819090">
        <id>P54845-1</id>
        <label>NRL</label>
    </interactant>
    <organismsDiffer>false</organismsDiffer>
    <experiments>6</experiments>
</comment>
<comment type="interaction">
    <interactant intactId="EBI-748974">
        <id>Q96CV9</id>
    </interactant>
    <interactant intactId="EBI-1052153">
        <id>Q8WVJ2</id>
        <label>NUDCD2</label>
    </interactant>
    <organismsDiffer>false</organismsDiffer>
    <experiments>3</experiments>
</comment>
<comment type="interaction">
    <interactant intactId="EBI-748974">
        <id>Q96CV9</id>
    </interactant>
    <interactant intactId="EBI-8477661">
        <id>Q8IZS5</id>
        <label>OFCC1</label>
    </interactant>
    <organismsDiffer>false</organismsDiffer>
    <experiments>3</experiments>
</comment>
<comment type="interaction">
    <interactant intactId="EBI-748974">
        <id>Q96CV9</id>
    </interactant>
    <interactant intactId="EBI-748974">
        <id>Q96CV9</id>
        <label>OPTN</label>
    </interactant>
    <organismsDiffer>false</organismsDiffer>
    <experiments>16</experiments>
</comment>
<comment type="interaction">
    <interactant intactId="EBI-748974">
        <id>Q96CV9</id>
    </interactant>
    <interactant intactId="EBI-4392513">
        <id>P51582</id>
        <label>P2RY4</label>
    </interactant>
    <organismsDiffer>false</organismsDiffer>
    <experiments>3</experiments>
</comment>
<comment type="interaction">
    <interactant intactId="EBI-748974">
        <id>Q96CV9</id>
    </interactant>
    <interactant intactId="EBI-12149899">
        <id>Q8IVL6-2</id>
        <label>P3H3</label>
    </interactant>
    <organismsDiffer>false</organismsDiffer>
    <experiments>3</experiments>
</comment>
<comment type="interaction">
    <interactant intactId="EBI-748974">
        <id>Q96CV9</id>
    </interactant>
    <interactant intactId="EBI-1754555">
        <id>Q9Y2D5</id>
        <label>PALM2AKAP2</label>
    </interactant>
    <organismsDiffer>false</organismsDiffer>
    <experiments>3</experiments>
</comment>
<comment type="interaction">
    <interactant intactId="EBI-748974">
        <id>Q96CV9</id>
    </interactant>
    <interactant intactId="EBI-1053912">
        <id>O95340</id>
        <label>PAPSS2</label>
    </interactant>
    <organismsDiffer>false</organismsDiffer>
    <experiments>3</experiments>
</comment>
<comment type="interaction">
    <interactant intactId="EBI-748974">
        <id>Q96CV9</id>
    </interactant>
    <interactant intactId="EBI-2839993">
        <id>Q9BUH6</id>
        <label>PAXX</label>
    </interactant>
    <organismsDiffer>false</organismsDiffer>
    <experiments>3</experiments>
</comment>
<comment type="interaction">
    <interactant intactId="EBI-748974">
        <id>Q96CV9</id>
    </interactant>
    <interactant intactId="EBI-9090666">
        <id>Q08499-8</id>
        <label>PDE4D</label>
    </interactant>
    <organismsDiffer>false</organismsDiffer>
    <experiments>3</experiments>
</comment>
<comment type="interaction">
    <interactant intactId="EBI-748974">
        <id>Q96CV9</id>
    </interactant>
    <interactant intactId="EBI-716063">
        <id>Q13113</id>
        <label>PDZK1IP1</label>
    </interactant>
    <organismsDiffer>false</organismsDiffer>
    <experiments>3</experiments>
</comment>
<comment type="interaction">
    <interactant intactId="EBI-748974">
        <id>Q96CV9</id>
    </interactant>
    <interactant intactId="EBI-981985">
        <id>Q9Y5Y5</id>
        <label>PEX16</label>
    </interactant>
    <organismsDiffer>false</organismsDiffer>
    <experiments>3</experiments>
</comment>
<comment type="interaction">
    <interactant intactId="EBI-748974">
        <id>Q96CV9</id>
    </interactant>
    <interactant intactId="EBI-79165">
        <id>Q9NRD5</id>
        <label>PICK1</label>
    </interactant>
    <organismsDiffer>false</organismsDiffer>
    <experiments>3</experiments>
</comment>
<comment type="interaction">
    <interactant intactId="EBI-748974">
        <id>Q96CV9</id>
    </interactant>
    <interactant intactId="EBI-12701312">
        <id>P55058-2</id>
        <label>PLTP</label>
    </interactant>
    <organismsDiffer>false</organismsDiffer>
    <experiments>3</experiments>
</comment>
<comment type="interaction">
    <interactant intactId="EBI-748974">
        <id>Q96CV9</id>
    </interactant>
    <interactant intactId="EBI-12029004">
        <id>P78424</id>
        <label>POU6F2</label>
    </interactant>
    <organismsDiffer>false</organismsDiffer>
    <experiments>3</experiments>
</comment>
<comment type="interaction">
    <interactant intactId="EBI-748974">
        <id>Q96CV9</id>
    </interactant>
    <interactant intactId="EBI-1048104">
        <id>O60927</id>
        <label>PPP1R11</label>
    </interactant>
    <organismsDiffer>false</organismsDiffer>
    <experiments>3</experiments>
</comment>
<comment type="interaction">
    <interactant intactId="EBI-748974">
        <id>Q96CV9</id>
    </interactant>
    <interactant intactId="EBI-2803380">
        <id>P07225</id>
        <label>PROS1</label>
    </interactant>
    <organismsDiffer>false</organismsDiffer>
    <experiments>3</experiments>
</comment>
<comment type="interaction">
    <interactant intactId="EBI-748974">
        <id>Q96CV9</id>
    </interactant>
    <interactant intactId="EBI-359710">
        <id>P35998</id>
        <label>PSMC2</label>
    </interactant>
    <organismsDiffer>false</organismsDiffer>
    <experiments>3</experiments>
</comment>
<comment type="interaction">
    <interactant intactId="EBI-748974">
        <id>Q96CV9</id>
    </interactant>
    <interactant intactId="EBI-945792">
        <id>Q96PU8</id>
        <label>QKI</label>
    </interactant>
    <organismsDiffer>false</organismsDiffer>
    <experiments>3</experiments>
</comment>
<comment type="interaction">
    <interactant intactId="EBI-748974">
        <id>Q96CV9</id>
    </interactant>
    <interactant intactId="EBI-726075">
        <id>P61026</id>
        <label>RAB10</label>
    </interactant>
    <organismsDiffer>false</organismsDiffer>
    <experiments>3</experiments>
</comment>
<comment type="interaction">
    <interactant intactId="EBI-748974">
        <id>Q96CV9</id>
    </interactant>
    <interactant intactId="EBI-722293">
        <id>P61006</id>
        <label>RAB8A</label>
    </interactant>
    <organismsDiffer>false</organismsDiffer>
    <experiments>4</experiments>
</comment>
<comment type="interaction">
    <interactant intactId="EBI-748974">
        <id>Q96CV9</id>
    </interactant>
    <interactant intactId="EBI-25910540">
        <id>P52306-4</id>
        <label>RAP1GDS1</label>
    </interactant>
    <organismsDiffer>false</organismsDiffer>
    <experiments>3</experiments>
</comment>
<comment type="interaction">
    <interactant intactId="EBI-748974">
        <id>Q96CV9</id>
    </interactant>
    <interactant intactId="EBI-22012855">
        <id>Q13702-2</id>
        <label>RAPSN</label>
    </interactant>
    <organismsDiffer>false</organismsDiffer>
    <experiments>3</experiments>
</comment>
<comment type="interaction">
    <interactant intactId="EBI-748974">
        <id>Q96CV9</id>
    </interactant>
    <interactant intactId="EBI-10197061">
        <id>P10276-2</id>
        <label>RARA</label>
    </interactant>
    <organismsDiffer>false</organismsDiffer>
    <experiments>3</experiments>
</comment>
<comment type="interaction">
    <interactant intactId="EBI-748974">
        <id>Q96CV9</id>
    </interactant>
    <interactant intactId="EBI-960081">
        <id>P50749</id>
        <label>RASSF2</label>
    </interactant>
    <organismsDiffer>false</organismsDiffer>
    <experiments>3</experiments>
</comment>
<comment type="interaction">
    <interactant intactId="EBI-748974">
        <id>Q96CV9</id>
    </interactant>
    <interactant intactId="EBI-310707">
        <id>Q9NTZ6</id>
        <label>RBM12</label>
    </interactant>
    <organismsDiffer>false</organismsDiffer>
    <experiments>7</experiments>
</comment>
<comment type="interaction">
    <interactant intactId="EBI-748974">
        <id>Q96CV9</id>
    </interactant>
    <interactant intactId="EBI-10192441">
        <id>Q86VR2</id>
        <label>RETREG3</label>
    </interactant>
    <organismsDiffer>false</organismsDiffer>
    <experiments>3</experiments>
</comment>
<comment type="interaction">
    <interactant intactId="EBI-748974">
        <id>Q96CV9</id>
    </interactant>
    <interactant intactId="EBI-21535400">
        <id>Q6ZNA4-2</id>
        <label>RNF111</label>
    </interactant>
    <organismsDiffer>false</organismsDiffer>
    <experiments>3</experiments>
</comment>
<comment type="interaction">
    <interactant intactId="EBI-748974">
        <id>Q96CV9</id>
    </interactant>
    <interactant intactId="EBI-25829984">
        <id>Q9ULX5</id>
        <label>RNF112</label>
    </interactant>
    <organismsDiffer>false</organismsDiffer>
    <experiments>3</experiments>
</comment>
<comment type="interaction">
    <interactant intactId="EBI-748974">
        <id>Q96CV9</id>
    </interactant>
    <interactant intactId="EBI-723313">
        <id>Q9NWF9</id>
        <label>RNF216</label>
    </interactant>
    <organismsDiffer>false</organismsDiffer>
    <experiments>3</experiments>
</comment>
<comment type="interaction">
    <interactant intactId="EBI-748974">
        <id>Q96CV9</id>
    </interactant>
    <interactant intactId="EBI-10300482">
        <id>Q9BWG1</id>
        <label>RNF220</label>
    </interactant>
    <organismsDiffer>false</organismsDiffer>
    <experiments>3</experiments>
</comment>
<comment type="interaction">
    <interactant intactId="EBI-748974">
        <id>Q96CV9</id>
    </interactant>
    <interactant intactId="EBI-348482">
        <id>Q99942</id>
        <label>RNF5</label>
    </interactant>
    <organismsDiffer>false</organismsDiffer>
    <experiments>3</experiments>
</comment>
<comment type="interaction">
    <interactant intactId="EBI-748974">
        <id>Q96CV9</id>
    </interactant>
    <interactant intactId="EBI-366570">
        <id>Q9BUL9</id>
        <label>RPP25</label>
    </interactant>
    <organismsDiffer>false</organismsDiffer>
    <experiments>3</experiments>
</comment>
<comment type="interaction">
    <interactant intactId="EBI-748974">
        <id>Q96CV9</id>
    </interactant>
    <interactant intactId="EBI-743686">
        <id>P23297</id>
        <label>S100A1</label>
    </interactant>
    <organismsDiffer>false</organismsDiffer>
    <experiments>3</experiments>
</comment>
<comment type="interaction">
    <interactant intactId="EBI-748974">
        <id>Q96CV9</id>
    </interactant>
    <interactant intactId="EBI-727004">
        <id>O00560</id>
        <label>SDCBP</label>
    </interactant>
    <organismsDiffer>false</organismsDiffer>
    <experiments>3</experiments>
</comment>
<comment type="interaction">
    <interactant intactId="EBI-748974">
        <id>Q96CV9</id>
    </interactant>
    <interactant intactId="EBI-10182463">
        <id>Q2NKQ1-4</id>
        <label>SGSM1</label>
    </interactant>
    <organismsDiffer>false</organismsDiffer>
    <experiments>3</experiments>
</comment>
<comment type="interaction">
    <interactant intactId="EBI-748974">
        <id>Q96CV9</id>
    </interactant>
    <interactant intactId="EBI-18082698">
        <id>Q96QE2</id>
        <label>SLC2A13</label>
    </interactant>
    <organismsDiffer>false</organismsDiffer>
    <experiments>3</experiments>
</comment>
<comment type="interaction">
    <interactant intactId="EBI-748974">
        <id>Q96CV9</id>
    </interactant>
    <interactant intactId="EBI-726491">
        <id>Q9NY26</id>
        <label>SLC39A1</label>
    </interactant>
    <organismsDiffer>false</organismsDiffer>
    <experiments>3</experiments>
</comment>
<comment type="interaction">
    <interactant intactId="EBI-748974">
        <id>Q96CV9</id>
    </interactant>
    <interactant intactId="EBI-1567153">
        <id>Q15797</id>
        <label>SMAD1</label>
    </interactant>
    <organismsDiffer>false</organismsDiffer>
    <experiments>3</experiments>
</comment>
<comment type="interaction">
    <interactant intactId="EBI-748974">
        <id>Q96CV9</id>
    </interactant>
    <interactant intactId="EBI-358489">
        <id>Q96GM5</id>
        <label>SMARCD1</label>
    </interactant>
    <organismsDiffer>false</organismsDiffer>
    <experiments>3</experiments>
</comment>
<comment type="interaction">
    <interactant intactId="EBI-748974">
        <id>Q96CV9</id>
    </interactant>
    <interactant intactId="EBI-12275818">
        <id>Q53HV7-2</id>
        <label>SMUG1</label>
    </interactant>
    <organismsDiffer>false</organismsDiffer>
    <experiments>3</experiments>
</comment>
<comment type="interaction">
    <interactant intactId="EBI-748974">
        <id>Q96CV9</id>
    </interactant>
    <interactant intactId="EBI-632715">
        <id>Q13573</id>
        <label>SNW1</label>
    </interactant>
    <organismsDiffer>false</organismsDiffer>
    <experiments>3</experiments>
</comment>
<comment type="interaction">
    <interactant intactId="EBI-748974">
        <id>Q96CV9</id>
    </interactant>
    <interactant intactId="EBI-3923692">
        <id>Q496A3</id>
        <label>SPATS1</label>
    </interactant>
    <organismsDiffer>false</organismsDiffer>
    <experiments>3</experiments>
</comment>
<comment type="interaction">
    <interactant intactId="EBI-748974">
        <id>Q96CV9</id>
    </interactant>
    <interactant intactId="EBI-985324">
        <id>Q9NRA0</id>
        <label>SPHK2</label>
    </interactant>
    <organismsDiffer>false</organismsDiffer>
    <experiments>3</experiments>
</comment>
<comment type="interaction">
    <interactant intactId="EBI-748974">
        <id>Q96CV9</id>
    </interactant>
    <interactant intactId="EBI-307104">
        <id>Q13501</id>
        <label>SQSTM1</label>
    </interactant>
    <organismsDiffer>false</organismsDiffer>
    <experiments>7</experiments>
</comment>
<comment type="interaction">
    <interactant intactId="EBI-748974">
        <id>Q96CV9</id>
    </interactant>
    <interactant intactId="EBI-21541735">
        <id>Q92185</id>
        <label>ST8SIA1</label>
    </interactant>
    <organismsDiffer>false</organismsDiffer>
    <experiments>3</experiments>
</comment>
<comment type="interaction">
    <interactant intactId="EBI-748974">
        <id>Q96CV9</id>
    </interactant>
    <interactant intactId="EBI-448878">
        <id>Q13586</id>
        <label>STIM1</label>
    </interactant>
    <organismsDiffer>false</organismsDiffer>
    <experiments>3</experiments>
</comment>
<comment type="interaction">
    <interactant intactId="EBI-748974">
        <id>Q96CV9</id>
    </interactant>
    <interactant intactId="EBI-2269898">
        <id>Q9P2R7</id>
        <label>SUCLA2</label>
    </interactant>
    <organismsDiffer>false</organismsDiffer>
    <experiments>3</experiments>
</comment>
<comment type="interaction">
    <interactant intactId="EBI-748974">
        <id>Q96CV9</id>
    </interactant>
    <interactant intactId="EBI-12099160">
        <id>Q8N205-2</id>
        <label>SYNE4</label>
    </interactant>
    <organismsDiffer>false</organismsDiffer>
    <experiments>3</experiments>
</comment>
<comment type="interaction">
    <interactant intactId="EBI-748974">
        <id>Q96CV9</id>
    </interactant>
    <interactant intactId="EBI-1042683">
        <id>P26639</id>
        <label>TARS1</label>
    </interactant>
    <organismsDiffer>false</organismsDiffer>
    <experiments>3</experiments>
</comment>
<comment type="interaction">
    <interactant intactId="EBI-748974">
        <id>Q96CV9</id>
    </interactant>
    <interactant intactId="EBI-1048247">
        <id>Q8TC07</id>
        <label>TBC1D15</label>
    </interactant>
    <organismsDiffer>false</organismsDiffer>
    <experiments>9</experiments>
</comment>
<comment type="interaction">
    <interactant intactId="EBI-748974">
        <id>Q96CV9</id>
    </interactant>
    <interactant intactId="EBI-714625">
        <id>Q9HA65</id>
        <label>TBC1D17</label>
    </interactant>
    <organismsDiffer>false</organismsDiffer>
    <experiments>7</experiments>
</comment>
<comment type="interaction">
    <interactant intactId="EBI-748974">
        <id>Q96CV9</id>
    </interactant>
    <interactant intactId="EBI-356402">
        <id>Q9UHD2</id>
        <label>TBK1</label>
    </interactant>
    <organismsDiffer>false</organismsDiffer>
    <experiments>17</experiments>
</comment>
<comment type="interaction">
    <interactant intactId="EBI-748974">
        <id>Q96CV9</id>
    </interactant>
    <interactant intactId="EBI-12151837">
        <id>P28347-2</id>
        <label>TEAD1</label>
    </interactant>
    <organismsDiffer>false</organismsDiffer>
    <experiments>3</experiments>
</comment>
<comment type="interaction">
    <interactant intactId="EBI-748974">
        <id>Q96CV9</id>
    </interactant>
    <interactant intactId="EBI-711018">
        <id>P54274-2</id>
        <label>TERF1</label>
    </interactant>
    <organismsDiffer>false</organismsDiffer>
    <experiments>3</experiments>
</comment>
<comment type="interaction">
    <interactant intactId="EBI-748974">
        <id>Q96CV9</id>
    </interactant>
    <interactant intactId="EBI-2824523">
        <id>Q6YHU6</id>
        <label>THADA</label>
    </interactant>
    <organismsDiffer>false</organismsDiffer>
    <experiments>3</experiments>
</comment>
<comment type="interaction">
    <interactant intactId="EBI-748974">
        <id>Q96CV9</id>
    </interactant>
    <interactant intactId="EBI-3925505">
        <id>Q8TBB0</id>
        <label>THAP6</label>
    </interactant>
    <organismsDiffer>false</organismsDiffer>
    <experiments>3</experiments>
</comment>
<comment type="interaction">
    <interactant intactId="EBI-748974">
        <id>Q96CV9</id>
    </interactant>
    <interactant intactId="EBI-372399">
        <id>P52888</id>
        <label>THOP1</label>
    </interactant>
    <organismsDiffer>false</organismsDiffer>
    <experiments>3</experiments>
</comment>
<comment type="interaction">
    <interactant intactId="EBI-748974">
        <id>Q96CV9</id>
    </interactant>
    <interactant intactId="EBI-357849">
        <id>Q15025</id>
        <label>TNIP1</label>
    </interactant>
    <organismsDiffer>false</organismsDiffer>
    <experiments>22</experiments>
</comment>
<comment type="interaction">
    <interactant intactId="EBI-748974">
        <id>Q96CV9</id>
    </interactant>
    <interactant intactId="EBI-9092141">
        <id>I6L9D0</id>
        <label>TTLL7</label>
    </interactant>
    <organismsDiffer>false</organismsDiffer>
    <experiments>3</experiments>
</comment>
<comment type="interaction">
    <interactant intactId="EBI-748974">
        <id>Q96CV9</id>
    </interactant>
    <interactant intactId="EBI-9088812">
        <id>Q5VYS8-5</id>
        <label>TUT7</label>
    </interactant>
    <organismsDiffer>false</organismsDiffer>
    <experiments>3</experiments>
</comment>
<comment type="interaction">
    <interactant intactId="EBI-748974">
        <id>Q96CV9</id>
    </interactant>
    <interactant intactId="EBI-2339348">
        <id>P49459</id>
        <label>UBE2A</label>
    </interactant>
    <organismsDiffer>false</organismsDiffer>
    <experiments>3</experiments>
</comment>
<comment type="interaction">
    <interactant intactId="EBI-748974">
        <id>Q96CV9</id>
    </interactant>
    <interactant intactId="EBI-743272">
        <id>O75604</id>
        <label>USP2</label>
    </interactant>
    <organismsDiffer>false</organismsDiffer>
    <experiments>3</experiments>
</comment>
<comment type="interaction">
    <interactant intactId="EBI-748974">
        <id>Q96CV9</id>
    </interactant>
    <interactant intactId="EBI-11027067">
        <id>P18206-2</id>
        <label>VCL</label>
    </interactant>
    <organismsDiffer>false</organismsDiffer>
    <experiments>3</experiments>
</comment>
<comment type="interaction">
    <interactant intactId="EBI-748974">
        <id>Q96CV9</id>
    </interactant>
    <interactant intactId="EBI-21845957">
        <id>O15195-2</id>
        <label>VILL</label>
    </interactant>
    <organismsDiffer>false</organismsDiffer>
    <experiments>3</experiments>
</comment>
<comment type="interaction">
    <interactant intactId="EBI-748974">
        <id>Q96CV9</id>
    </interactant>
    <interactant intactId="EBI-712969">
        <id>Q9Y3C0</id>
        <label>WASHC3</label>
    </interactant>
    <organismsDiffer>false</organismsDiffer>
    <experiments>17</experiments>
</comment>
<comment type="interaction">
    <interactant intactId="EBI-748974">
        <id>Q96CV9</id>
    </interactant>
    <interactant intactId="EBI-10264625">
        <id>Q8IZQ1-2</id>
        <label>WDFY3</label>
    </interactant>
    <organismsDiffer>false</organismsDiffer>
    <experiments>3</experiments>
</comment>
<comment type="interaction">
    <interactant intactId="EBI-748974">
        <id>Q96CV9</id>
    </interactant>
    <interactant intactId="EBI-25911158">
        <id>Q6ZS81-2</id>
        <label>WDFY4</label>
    </interactant>
    <organismsDiffer>false</organismsDiffer>
    <experiments>3</experiments>
</comment>
<comment type="interaction">
    <interactant intactId="EBI-748974">
        <id>Q96CV9</id>
    </interactant>
    <interactant intactId="EBI-10176632">
        <id>O43829</id>
        <label>ZBTB14</label>
    </interactant>
    <organismsDiffer>false</organismsDiffer>
    <experiments>3</experiments>
</comment>
<comment type="interaction">
    <interactant intactId="EBI-748974">
        <id>Q96CV9</id>
    </interactant>
    <interactant intactId="EBI-744864">
        <id>P10074</id>
        <label>ZBTB48</label>
    </interactant>
    <organismsDiffer>false</organismsDiffer>
    <experiments>3</experiments>
</comment>
<comment type="interaction">
    <interactant intactId="EBI-748974">
        <id>Q96CV9</id>
    </interactant>
    <interactant intactId="EBI-10183064">
        <id>Q8N5A5-2</id>
        <label>ZGPAT</label>
    </interactant>
    <organismsDiffer>false</organismsDiffer>
    <experiments>3</experiments>
</comment>
<comment type="interaction">
    <interactant intactId="EBI-748974">
        <id>Q96CV9</id>
    </interactant>
    <interactant intactId="EBI-25830993">
        <id>Q96EF9</id>
        <label>ZHX1-C8orf76</label>
    </interactant>
    <organismsDiffer>false</organismsDiffer>
    <experiments>3</experiments>
</comment>
<comment type="interaction">
    <interactant intactId="EBI-748974">
        <id>Q96CV9</id>
    </interactant>
    <interactant intactId="EBI-10199654">
        <id>P17029</id>
        <label>ZKSCAN1</label>
    </interactant>
    <organismsDiffer>false</organismsDiffer>
    <experiments>3</experiments>
</comment>
<comment type="interaction">
    <interactant intactId="EBI-748974">
        <id>Q96CV9</id>
    </interactant>
    <interactant intactId="EBI-2682299">
        <id>Q96NC0</id>
        <label>ZMAT2</label>
    </interactant>
    <organismsDiffer>false</organismsDiffer>
    <experiments>4</experiments>
</comment>
<comment type="interaction">
    <interactant intactId="EBI-748974">
        <id>Q96CV9</id>
    </interactant>
    <interactant intactId="EBI-10984536">
        <id>Q5VZL5-4</id>
        <label>ZMYM4</label>
    </interactant>
    <organismsDiffer>false</organismsDiffer>
    <experiments>3</experiments>
</comment>
<comment type="interaction">
    <interactant intactId="EBI-748974">
        <id>Q96CV9</id>
    </interactant>
    <interactant intactId="EBI-2514645">
        <id>O95789</id>
        <label>ZMYM6</label>
    </interactant>
    <organismsDiffer>false</organismsDiffer>
    <experiments>2</experiments>
</comment>
<comment type="interaction">
    <interactant intactId="EBI-748974">
        <id>Q96CV9</id>
    </interactant>
    <interactant intactId="EBI-1105334">
        <id>P17021</id>
        <label>ZNF17</label>
    </interactant>
    <organismsDiffer>false</organismsDiffer>
    <experiments>3</experiments>
</comment>
<comment type="interaction">
    <interactant intactId="EBI-748974">
        <id>Q96CV9</id>
    </interactant>
    <interactant intactId="EBI-396200">
        <id>Q9Y2X9</id>
        <label>ZNF281</label>
    </interactant>
    <organismsDiffer>false</organismsDiffer>
    <experiments>3</experiments>
</comment>
<comment type="interaction">
    <interactant intactId="EBI-748974">
        <id>Q96CV9</id>
    </interactant>
    <interactant intactId="EBI-12988373">
        <id>Q9NR11-2</id>
        <label>ZNF302</label>
    </interactant>
    <organismsDiffer>false</organismsDiffer>
    <experiments>3</experiments>
</comment>
<comment type="interaction">
    <interactant intactId="EBI-748974">
        <id>Q96CV9</id>
    </interactant>
    <interactant intactId="EBI-7233259">
        <id>Q86UD4</id>
        <label>ZNF329</label>
    </interactant>
    <organismsDiffer>false</organismsDiffer>
    <experiments>3</experiments>
</comment>
<comment type="interaction">
    <interactant intactId="EBI-748974">
        <id>Q96CV9</id>
    </interactant>
    <interactant intactId="EBI-8643207">
        <id>Q8TD17</id>
        <label>ZNF398</label>
    </interactant>
    <organismsDiffer>false</organismsDiffer>
    <experiments>3</experiments>
</comment>
<comment type="interaction">
    <interactant intactId="EBI-748974">
        <id>Q96CV9</id>
    </interactant>
    <interactant intactId="EBI-10288482">
        <id>Q96HQ0</id>
        <label>ZNF419</label>
    </interactant>
    <organismsDiffer>false</organismsDiffer>
    <experiments>3</experiments>
</comment>
<comment type="interaction">
    <interactant intactId="EBI-748974">
        <id>Q96CV9</id>
    </interactant>
    <interactant intactId="EBI-743265">
        <id>Q9BUY5</id>
        <label>ZNF426</label>
    </interactant>
    <organismsDiffer>false</organismsDiffer>
    <experiments>4</experiments>
</comment>
<comment type="interaction">
    <interactant intactId="EBI-748974">
        <id>Q96CV9</id>
    </interactant>
    <interactant intactId="EBI-12010736">
        <id>Q8N0Y2-2</id>
        <label>ZNF444</label>
    </interactant>
    <organismsDiffer>false</organismsDiffer>
    <experiments>3</experiments>
</comment>
<comment type="interaction">
    <interactant intactId="EBI-748974">
        <id>Q96CV9</id>
    </interactant>
    <interactant intactId="EBI-740232">
        <id>Q9NWS9-2</id>
        <label>ZNF446</label>
    </interactant>
    <organismsDiffer>false</organismsDiffer>
    <experiments>3</experiments>
</comment>
<comment type="interaction">
    <interactant intactId="EBI-748974">
        <id>Q96CV9</id>
    </interactant>
    <interactant intactId="EBI-25831733">
        <id>Q96MN9-2</id>
        <label>ZNF488</label>
    </interactant>
    <organismsDiffer>false</organismsDiffer>
    <experiments>3</experiments>
</comment>
<comment type="interaction">
    <interactant intactId="EBI-748974">
        <id>Q96CV9</id>
    </interactant>
    <interactant intactId="EBI-9091553">
        <id>Q96LX8</id>
        <label>ZNF597</label>
    </interactant>
    <organismsDiffer>false</organismsDiffer>
    <experiments>3</experiments>
</comment>
<comment type="interaction">
    <interactant intactId="EBI-748974">
        <id>Q96CV9</id>
    </interactant>
    <interactant intactId="EBI-745276">
        <id>Q9BS34</id>
        <label>ZNF670</label>
    </interactant>
    <organismsDiffer>false</organismsDiffer>
    <experiments>6</experiments>
</comment>
<comment type="interaction">
    <interactant intactId="EBI-748974">
        <id>Q96CV9</id>
    </interactant>
    <interactant intactId="EBI-1811414">
        <id>Q9C0D3</id>
        <label>ZYG11B</label>
    </interactant>
    <organismsDiffer>false</organismsDiffer>
    <experiments>3</experiments>
</comment>
<comment type="interaction">
    <interactant intactId="EBI-748974">
        <id>Q96CV9</id>
    </interactant>
    <interactant intactId="EBI-25911564">
        <id>Q8N1Y9</id>
    </interactant>
    <organismsDiffer>false</organismsDiffer>
    <experiments>3</experiments>
</comment>
<comment type="interaction">
    <interactant intactId="EBI-748974">
        <id>Q96CV9</id>
    </interactant>
    <interactant intactId="EBI-15804516">
        <id>Q29122</id>
        <label>MYO6</label>
    </interactant>
    <organismsDiffer>true</organismsDiffer>
    <experiments>3</experiments>
</comment>
<comment type="interaction">
    <interactant intactId="EBI-748974">
        <id>Q96CV9</id>
    </interactant>
    <interactant intactId="EBI-6858501">
        <id>PRO_0000045599</id>
        <dbReference type="UniProtKB" id="Q99IB8"/>
    </interactant>
    <organismsDiffer>true</organismsDiffer>
    <experiments>3</experiments>
</comment>
<comment type="interaction">
    <interactant intactId="EBI-9091423">
        <id>Q96CV9-2</id>
    </interactant>
    <interactant intactId="EBI-21535880">
        <id>Q92870-2</id>
        <label>APBB2</label>
    </interactant>
    <organismsDiffer>false</organismsDiffer>
    <experiments>3</experiments>
</comment>
<comment type="interaction">
    <interactant intactId="EBI-9091423">
        <id>Q96CV9-2</id>
    </interactant>
    <interactant intactId="EBI-10968534">
        <id>P50570-2</id>
        <label>DNM2</label>
    </interactant>
    <organismsDiffer>false</organismsDiffer>
    <experiments>3</experiments>
</comment>
<comment type="interaction">
    <interactant intactId="EBI-9091423">
        <id>Q96CV9-2</id>
    </interactant>
    <interactant intactId="EBI-11110431">
        <id>Q8TB36</id>
        <label>GDAP1</label>
    </interactant>
    <organismsDiffer>false</organismsDiffer>
    <experiments>3</experiments>
</comment>
<comment type="interaction">
    <interactant intactId="EBI-9091423">
        <id>Q96CV9-2</id>
    </interactant>
    <interactant intactId="EBI-466029">
        <id>P42858</id>
        <label>HTT</label>
    </interactant>
    <organismsDiffer>false</organismsDiffer>
    <experiments>18</experiments>
</comment>
<comment type="interaction">
    <interactant intactId="EBI-9091423">
        <id>Q96CV9-2</id>
    </interactant>
    <interactant intactId="EBI-725647">
        <id>Q99732</id>
        <label>LITAF</label>
    </interactant>
    <organismsDiffer>false</organismsDiffer>
    <experiments>3</experiments>
</comment>
<comment type="interaction">
    <interactant intactId="EBI-9091423">
        <id>Q96CV9-2</id>
    </interactant>
    <interactant intactId="EBI-748312">
        <id>P49821</id>
        <label>NDUFV1</label>
    </interactant>
    <organismsDiffer>false</organismsDiffer>
    <experiments>3</experiments>
</comment>
<comment type="interaction">
    <interactant intactId="EBI-9091423">
        <id>Q96CV9-2</id>
    </interactant>
    <interactant intactId="EBI-25847109">
        <id>O14656-2</id>
        <label>TOR1A</label>
    </interactant>
    <organismsDiffer>false</organismsDiffer>
    <experiments>3</experiments>
</comment>
<comment type="interaction">
    <interactant intactId="EBI-9091423">
        <id>Q96CV9-2</id>
    </interactant>
    <interactant intactId="EBI-720609">
        <id>O76024</id>
        <label>WFS1</label>
    </interactant>
    <organismsDiffer>false</organismsDiffer>
    <experiments>3</experiments>
</comment>
<comment type="interaction">
    <interactant intactId="EBI-9091423">
        <id>Q96CV9-2</id>
    </interactant>
    <interactant intactId="EBI-524753">
        <id>Q8IUH5</id>
        <label>ZDHHC17</label>
    </interactant>
    <organismsDiffer>false</organismsDiffer>
    <experiments>2</experiments>
</comment>
<comment type="subcellular location">
    <subcellularLocation>
        <location>Cytoplasm</location>
        <location>Perinuclear region</location>
    </subcellularLocation>
    <subcellularLocation>
        <location evidence="5 20 21 32 33">Golgi apparatus</location>
    </subcellularLocation>
    <subcellularLocation>
        <location>Golgi apparatus</location>
        <location>trans-Golgi network</location>
    </subcellularLocation>
    <subcellularLocation>
        <location>Cytoplasmic vesicle</location>
        <location>Autophagosome</location>
    </subcellularLocation>
    <subcellularLocation>
        <location>Cytoplasmic vesicle</location>
    </subcellularLocation>
    <subcellularLocation>
        <location evidence="20">Recycling endosome</location>
    </subcellularLocation>
    <text evidence="32">Found in the perinuclear region and associates with the Golgi apparatus (PubMed:27534431). Colocalizes with MYO6 and RAB8 at the Golgi complex and in vesicular structures close to the plasma membrane. Localizes to LC3-positive cytoplasmic vesicles upon induction of autophagy.</text>
</comment>
<comment type="alternative products">
    <event type="alternative splicing"/>
    <isoform>
        <id>Q96CV9-1</id>
        <name>1</name>
        <sequence type="displayed"/>
    </isoform>
    <isoform>
        <id>Q96CV9-2</id>
        <name>2</name>
        <sequence type="described" ref="VSP_013262"/>
    </isoform>
    <isoform>
        <id>Q96CV9-3</id>
        <name>3</name>
        <sequence type="described" ref="VSP_013261"/>
    </isoform>
</comment>
<comment type="tissue specificity">
    <text evidence="7 8 9 37">Present in aqueous humor of the eye (at protein level). Expressed in the trabecular meshwork (at protein level) (PubMed:11834836, PubMed:12379221, PubMed:12646749). Expressed in nonpigmented ciliary epithelium (at protein level) (PubMed:11834836). Expressed at high levels in skeletal muscle, also detected in heart, brain, pancreas, kidney, placenta and liver (PubMed:9488477). Expressed in dermal fibroblasts (at protein level) (PubMed:11834836).</text>
</comment>
<comment type="induction">
    <text evidence="5 8 9 37">Up-regulated by TNF (PubMed:10807909, PubMed:12379221, PubMed:9488477). Up-regulated by IFNG. TNF and IFNG act synergistically to stimulate OPTN expression (PubMed:10807909). Induced by glucocorticoids, such as dexamethasone (PubMed:12379221). In an in vitro experimental setting, in which donor eyes are subjected to increased perfusion pressure (10 to 30 mm Hg) in the anterior chamber, there is no up-regulation in the trabecular meshwork at the transcript level for periods ranging between 1 and 24 hours (PubMed:12646749). However, exposure to continuous elevated pressure for several days shows an induction of OPTN expression, with a 56% increase after 7 days (PubMed:12379221).</text>
</comment>
<comment type="induction">
    <text evidence="21">(Microbial infection) Up-regulated in response to Sendai virus infection or double stranded RNA treatment (at protein level); the up-regulation is direct and not mediated through a response to type I interferons; this may negatively regulate the interferon response to RNA-activated antiviral signaling pathways.</text>
</comment>
<comment type="domain">
    <text evidence="20">Ubiquitin-binding motif (UBAN), also called UBD, is essential for subcellular localization to recycling endosomes and for proper trafficking of transferrin to the juxtanuclear region. It is involved in interaction with ubiquitinated TFRC.</text>
</comment>
<comment type="domain">
    <text evidence="29">The LIR (LC3-interacting region) motif mediates the interaction with ATG8 family proteins.</text>
</comment>
<comment type="PTM">
    <text evidence="5 24">Phosphorylated by TBK1, leading to restrict bacterial proliferation in case of infection. Phosphorylation is induced by phorbol esters and decreases its half-time.</text>
</comment>
<comment type="disease" evidence="7 10 11 13 14 17 19 20 22 25 27 31">
    <disease id="DI-00938">
        <name>Glaucoma 1, open angle, E</name>
        <acronym>GLC1E</acronym>
        <description>A form of primary open angle glaucoma (POAG). POAG is characterized by a specific pattern of optic nerve and visual field defects. The angle of the anterior chamber of the eye is open, and usually the intraocular pressure is increased. However, glaucoma can occur at any intraocular pressure. The disease is generally asymptomatic until the late stages, by which time significant and irreversible optic nerve damage has already taken place.</description>
        <dbReference type="MIM" id="137760"/>
    </disease>
    <text>The disease is caused by variants affecting the gene represented in this entry.</text>
</comment>
<comment type="disease" evidence="15">
    <disease id="DI-00879">
        <name>Glaucoma, normal pressure</name>
        <acronym>NPG</acronym>
        <description>A primary glaucoma characterized by intraocular pression consistently within the statistically normal population range.</description>
        <dbReference type="MIM" id="606657"/>
    </disease>
    <text>Disease susceptibility is associated with variants affecting the gene represented in this entry.</text>
</comment>
<comment type="disease" evidence="23 32">
    <disease id="DI-02705">
        <name>Amyotrophic lateral sclerosis 12 with or without frontotemporal dementia</name>
        <acronym>ALS12</acronym>
        <description>A form of amyotrophic lateral sclerosis, a neurodegenerative disorder affecting upper motor neurons in the brain and lower motor neurons in the brain stem and spinal cord, resulting in fatal paralysis. Sensory abnormalities are absent. The pathologic hallmarks of the disease include pallor of the corticospinal tract due to loss of motor neurons, presence of ubiquitin-positive inclusions within surviving motor neurons, and deposition of pathologic aggregates. The etiology of amyotrophic lateral sclerosis is likely to be multifactorial, involving both genetic and environmental factors. The disease is inherited in 5-10% of the cases. ALS12 inheritance can be autosomal dominant or autosomal recessive. There is also sporadic occurrence. ALS12 patients may develop frontotemporal dementia.</description>
        <dbReference type="MIM" id="613435"/>
    </disease>
    <text>The disease is caused by variants affecting the gene represented in this entry.</text>
</comment>
<dbReference type="EMBL" id="AF061034">
    <property type="protein sequence ID" value="AAC16046.1"/>
    <property type="molecule type" value="mRNA"/>
</dbReference>
<dbReference type="EMBL" id="AF061034">
    <property type="protein sequence ID" value="AAC16047.1"/>
    <property type="molecule type" value="mRNA"/>
</dbReference>
<dbReference type="EMBL" id="AF420371">
    <property type="protein sequence ID" value="AAL76327.1"/>
    <property type="molecule type" value="mRNA"/>
</dbReference>
<dbReference type="EMBL" id="AF420372">
    <property type="protein sequence ID" value="AAL76328.1"/>
    <property type="molecule type" value="mRNA"/>
</dbReference>
<dbReference type="EMBL" id="AF420373">
    <property type="protein sequence ID" value="AAL76329.1"/>
    <property type="molecule type" value="mRNA"/>
</dbReference>
<dbReference type="EMBL" id="AF283527">
    <property type="protein sequence ID" value="AAG00497.1"/>
    <property type="molecule type" value="Genomic_DNA"/>
</dbReference>
<dbReference type="EMBL" id="AF283520">
    <property type="protein sequence ID" value="AAG00497.1"/>
    <property type="status" value="JOINED"/>
    <property type="molecule type" value="Genomic_DNA"/>
</dbReference>
<dbReference type="EMBL" id="AF283521">
    <property type="protein sequence ID" value="AAG00497.1"/>
    <property type="status" value="JOINED"/>
    <property type="molecule type" value="Genomic_DNA"/>
</dbReference>
<dbReference type="EMBL" id="AF283522">
    <property type="protein sequence ID" value="AAG00497.1"/>
    <property type="status" value="JOINED"/>
    <property type="molecule type" value="Genomic_DNA"/>
</dbReference>
<dbReference type="EMBL" id="AF283523">
    <property type="protein sequence ID" value="AAG00497.1"/>
    <property type="status" value="JOINED"/>
    <property type="molecule type" value="Genomic_DNA"/>
</dbReference>
<dbReference type="EMBL" id="AF283524">
    <property type="protein sequence ID" value="AAG00497.1"/>
    <property type="status" value="JOINED"/>
    <property type="molecule type" value="Genomic_DNA"/>
</dbReference>
<dbReference type="EMBL" id="AF283525">
    <property type="protein sequence ID" value="AAG00497.1"/>
    <property type="status" value="JOINED"/>
    <property type="molecule type" value="Genomic_DNA"/>
</dbReference>
<dbReference type="EMBL" id="AF283526">
    <property type="protein sequence ID" value="AAG00497.1"/>
    <property type="status" value="JOINED"/>
    <property type="molecule type" value="Genomic_DNA"/>
</dbReference>
<dbReference type="EMBL" id="AK055403">
    <property type="protein sequence ID" value="BAG51512.1"/>
    <property type="molecule type" value="mRNA"/>
</dbReference>
<dbReference type="EMBL" id="AL355355">
    <property type="status" value="NOT_ANNOTATED_CDS"/>
    <property type="molecule type" value="Genomic_DNA"/>
</dbReference>
<dbReference type="EMBL" id="CH471072">
    <property type="protein sequence ID" value="EAW86301.1"/>
    <property type="molecule type" value="Genomic_DNA"/>
</dbReference>
<dbReference type="EMBL" id="CH471072">
    <property type="protein sequence ID" value="EAW86302.1"/>
    <property type="molecule type" value="Genomic_DNA"/>
</dbReference>
<dbReference type="EMBL" id="CH471072">
    <property type="protein sequence ID" value="EAW86303.1"/>
    <property type="molecule type" value="Genomic_DNA"/>
</dbReference>
<dbReference type="EMBL" id="CH471072">
    <property type="protein sequence ID" value="EAW86304.1"/>
    <property type="molecule type" value="Genomic_DNA"/>
</dbReference>
<dbReference type="EMBL" id="CH471072">
    <property type="protein sequence ID" value="EAW86306.1"/>
    <property type="molecule type" value="Genomic_DNA"/>
</dbReference>
<dbReference type="EMBL" id="CH471072">
    <property type="protein sequence ID" value="EAW86308.1"/>
    <property type="molecule type" value="Genomic_DNA"/>
</dbReference>
<dbReference type="EMBL" id="CH471072">
    <property type="protein sequence ID" value="EAW86309.1"/>
    <property type="molecule type" value="Genomic_DNA"/>
</dbReference>
<dbReference type="EMBL" id="BC013876">
    <property type="protein sequence ID" value="AAH13876.1"/>
    <property type="molecule type" value="mRNA"/>
</dbReference>
<dbReference type="EMBL" id="BC032762">
    <property type="protein sequence ID" value="AAH32762.1"/>
    <property type="molecule type" value="mRNA"/>
</dbReference>
<dbReference type="EMBL" id="AF049614">
    <property type="protein sequence ID" value="AAC26850.1"/>
    <property type="molecule type" value="mRNA"/>
</dbReference>
<dbReference type="CCDS" id="CCDS7094.1">
    <molecule id="Q96CV9-1"/>
</dbReference>
<dbReference type="RefSeq" id="NP_001008212.1">
    <molecule id="Q96CV9-1"/>
    <property type="nucleotide sequence ID" value="NM_001008211.1"/>
</dbReference>
<dbReference type="RefSeq" id="NP_001008213.1">
    <molecule id="Q96CV9-1"/>
    <property type="nucleotide sequence ID" value="NM_001008212.2"/>
</dbReference>
<dbReference type="RefSeq" id="NP_001008214.1">
    <molecule id="Q96CV9-1"/>
    <property type="nucleotide sequence ID" value="NM_001008213.1"/>
</dbReference>
<dbReference type="RefSeq" id="NP_068815.2">
    <molecule id="Q96CV9-1"/>
    <property type="nucleotide sequence ID" value="NM_021980.4"/>
</dbReference>
<dbReference type="PDB" id="2LO4">
    <property type="method" value="NMR"/>
    <property type="chains" value="A=550-577"/>
</dbReference>
<dbReference type="PDB" id="2LUE">
    <property type="method" value="NMR"/>
    <property type="chains" value="B=169-185"/>
</dbReference>
<dbReference type="PDB" id="3VTV">
    <property type="method" value="X-ray"/>
    <property type="resolution" value="1.70 A"/>
    <property type="chains" value="A=170-181"/>
</dbReference>
<dbReference type="PDB" id="3VTW">
    <property type="method" value="X-ray"/>
    <property type="resolution" value="2.52 A"/>
    <property type="chains" value="A/B/C=170-181"/>
</dbReference>
<dbReference type="PDB" id="5AAZ">
    <property type="method" value="NMR"/>
    <property type="chains" value="A=548-577"/>
</dbReference>
<dbReference type="PDB" id="5B83">
    <property type="method" value="X-ray"/>
    <property type="resolution" value="2.69 A"/>
    <property type="chains" value="B/C/E/F=416-510"/>
</dbReference>
<dbReference type="PDB" id="5EOA">
    <property type="method" value="X-ray"/>
    <property type="resolution" value="2.50 A"/>
    <property type="chains" value="A/B=26-103"/>
</dbReference>
<dbReference type="PDB" id="5EOF">
    <property type="method" value="X-ray"/>
    <property type="resolution" value="2.05 A"/>
    <property type="chains" value="A/B=26-103"/>
</dbReference>
<dbReference type="PDB" id="7CZM">
    <property type="method" value="X-ray"/>
    <property type="resolution" value="2.00 A"/>
    <property type="chains" value="C/D=173-185"/>
</dbReference>
<dbReference type="PDB" id="9B0B">
    <property type="method" value="X-ray"/>
    <property type="resolution" value="1.70 A"/>
    <property type="chains" value="A/B/C/D=419-512"/>
</dbReference>
<dbReference type="PDB" id="9B0Z">
    <property type="method" value="X-ray"/>
    <property type="resolution" value="2.41 A"/>
    <property type="chains" value="A/B=419-512"/>
</dbReference>
<dbReference type="PDB" id="9B12">
    <property type="method" value="X-ray"/>
    <property type="resolution" value="1.81 A"/>
    <property type="chains" value="C/D/E/F=419-512"/>
</dbReference>
<dbReference type="PDB" id="9IKQ">
    <property type="method" value="X-ray"/>
    <property type="resolution" value="1.93 A"/>
    <property type="chains" value="C/D=133-170"/>
</dbReference>
<dbReference type="PDBsum" id="2LO4"/>
<dbReference type="PDBsum" id="2LUE"/>
<dbReference type="PDBsum" id="3VTV"/>
<dbReference type="PDBsum" id="3VTW"/>
<dbReference type="PDBsum" id="5AAZ"/>
<dbReference type="PDBsum" id="5B83"/>
<dbReference type="PDBsum" id="5EOA"/>
<dbReference type="PDBsum" id="5EOF"/>
<dbReference type="PDBsum" id="7CZM"/>
<dbReference type="PDBsum" id="9B0B"/>
<dbReference type="PDBsum" id="9B0Z"/>
<dbReference type="PDBsum" id="9B12"/>
<dbReference type="PDBsum" id="9IKQ"/>
<dbReference type="SMR" id="Q96CV9"/>
<dbReference type="BioGRID" id="115436">
    <property type="interactions" value="443"/>
</dbReference>
<dbReference type="CORUM" id="Q96CV9"/>
<dbReference type="DIP" id="DIP-42001N"/>
<dbReference type="FunCoup" id="Q96CV9">
    <property type="interactions" value="1536"/>
</dbReference>
<dbReference type="IntAct" id="Q96CV9">
    <property type="interactions" value="277"/>
</dbReference>
<dbReference type="MINT" id="Q96CV9"/>
<dbReference type="STRING" id="9606.ENSP00000368022"/>
<dbReference type="TCDB" id="8.A.157.1.1">
    <property type="family name" value="the optineurin (optn) family"/>
</dbReference>
<dbReference type="GlyCosmos" id="Q96CV9">
    <property type="glycosylation" value="1 site, 1 glycan"/>
</dbReference>
<dbReference type="GlyGen" id="Q96CV9">
    <property type="glycosylation" value="2 sites, 1 O-linked glycan (2 sites)"/>
</dbReference>
<dbReference type="iPTMnet" id="Q96CV9"/>
<dbReference type="MetOSite" id="Q96CV9"/>
<dbReference type="PhosphoSitePlus" id="Q96CV9"/>
<dbReference type="BioMuta" id="OPTN"/>
<dbReference type="DMDM" id="317373403"/>
<dbReference type="jPOST" id="Q96CV9"/>
<dbReference type="MassIVE" id="Q96CV9"/>
<dbReference type="PaxDb" id="9606-ENSP00000368022"/>
<dbReference type="PeptideAtlas" id="Q96CV9"/>
<dbReference type="ProteomicsDB" id="76226">
    <molecule id="Q96CV9-1"/>
</dbReference>
<dbReference type="ProteomicsDB" id="76227">
    <molecule id="Q96CV9-2"/>
</dbReference>
<dbReference type="ProteomicsDB" id="76228">
    <molecule id="Q96CV9-3"/>
</dbReference>
<dbReference type="Pumba" id="Q96CV9"/>
<dbReference type="ABCD" id="Q96CV9">
    <property type="antibodies" value="1 sequenced antibody"/>
</dbReference>
<dbReference type="Antibodypedia" id="1010">
    <property type="antibodies" value="391 antibodies from 38 providers"/>
</dbReference>
<dbReference type="DNASU" id="10133"/>
<dbReference type="Ensembl" id="ENST00000263036.9">
    <molecule id="Q96CV9-1"/>
    <property type="protein sequence ID" value="ENSP00000263036.3"/>
    <property type="gene ID" value="ENSG00000123240.17"/>
</dbReference>
<dbReference type="Ensembl" id="ENST00000378747.8">
    <molecule id="Q96CV9-1"/>
    <property type="protein sequence ID" value="ENSP00000368021.3"/>
    <property type="gene ID" value="ENSG00000123240.17"/>
</dbReference>
<dbReference type="Ensembl" id="ENST00000378748.7">
    <molecule id="Q96CV9-1"/>
    <property type="protein sequence ID" value="ENSP00000368022.3"/>
    <property type="gene ID" value="ENSG00000123240.17"/>
</dbReference>
<dbReference type="Ensembl" id="ENST00000378752.7">
    <molecule id="Q96CV9-2"/>
    <property type="protein sequence ID" value="ENSP00000368027.3"/>
    <property type="gene ID" value="ENSG00000123240.17"/>
</dbReference>
<dbReference type="Ensembl" id="ENST00000378757.6">
    <molecule id="Q96CV9-1"/>
    <property type="protein sequence ID" value="ENSP00000368032.2"/>
    <property type="gene ID" value="ENSG00000123240.17"/>
</dbReference>
<dbReference type="Ensembl" id="ENST00000378764.6">
    <molecule id="Q96CV9-2"/>
    <property type="protein sequence ID" value="ENSP00000368040.1"/>
    <property type="gene ID" value="ENSG00000123240.17"/>
</dbReference>
<dbReference type="GeneID" id="10133"/>
<dbReference type="KEGG" id="hsa:10133"/>
<dbReference type="MANE-Select" id="ENST00000378747.8">
    <property type="protein sequence ID" value="ENSP00000368021.3"/>
    <property type="RefSeq nucleotide sequence ID" value="NM_001008212.2"/>
    <property type="RefSeq protein sequence ID" value="NP_001008213.1"/>
</dbReference>
<dbReference type="UCSC" id="uc001ilv.2">
    <molecule id="Q96CV9-1"/>
    <property type="organism name" value="human"/>
</dbReference>
<dbReference type="AGR" id="HGNC:17142"/>
<dbReference type="CTD" id="10133"/>
<dbReference type="DisGeNET" id="10133"/>
<dbReference type="GeneCards" id="OPTN"/>
<dbReference type="HGNC" id="HGNC:17142">
    <property type="gene designation" value="OPTN"/>
</dbReference>
<dbReference type="HPA" id="ENSG00000123240">
    <property type="expression patterns" value="Group enriched (skeletal muscle, tongue)"/>
</dbReference>
<dbReference type="MalaCards" id="OPTN"/>
<dbReference type="MIM" id="137760">
    <property type="type" value="phenotype"/>
</dbReference>
<dbReference type="MIM" id="602432">
    <property type="type" value="gene"/>
</dbReference>
<dbReference type="MIM" id="606657">
    <property type="type" value="phenotype"/>
</dbReference>
<dbReference type="MIM" id="613435">
    <property type="type" value="phenotype"/>
</dbReference>
<dbReference type="neXtProt" id="NX_Q96CV9"/>
<dbReference type="OpenTargets" id="ENSG00000123240"/>
<dbReference type="Orphanet" id="803">
    <property type="disease" value="Amyotrophic lateral sclerosis"/>
</dbReference>
<dbReference type="PharmGKB" id="PA31948"/>
<dbReference type="VEuPathDB" id="HostDB:ENSG00000123240"/>
<dbReference type="eggNOG" id="ENOG502QTG2">
    <property type="taxonomic scope" value="Eukaryota"/>
</dbReference>
<dbReference type="GeneTree" id="ENSGT00530000063808"/>
<dbReference type="HOGENOM" id="CLU_034097_1_0_1"/>
<dbReference type="InParanoid" id="Q96CV9"/>
<dbReference type="OMA" id="NETICAR"/>
<dbReference type="OrthoDB" id="6343844at2759"/>
<dbReference type="PAN-GO" id="Q96CV9">
    <property type="GO annotations" value="7 GO annotations based on evolutionary models"/>
</dbReference>
<dbReference type="PhylomeDB" id="Q96CV9"/>
<dbReference type="TreeFam" id="TF326608"/>
<dbReference type="PathwayCommons" id="Q96CV9"/>
<dbReference type="Reactome" id="R-HSA-2565942">
    <property type="pathway name" value="Regulation of PLK1 Activity at G2/M Transition"/>
</dbReference>
<dbReference type="Reactome" id="R-HSA-5205685">
    <property type="pathway name" value="PINK1-PRKN Mediated Mitophagy"/>
</dbReference>
<dbReference type="Reactome" id="R-HSA-5357786">
    <property type="pathway name" value="TNFR1-induced proapoptotic signaling"/>
</dbReference>
<dbReference type="Reactome" id="R-HSA-5357905">
    <property type="pathway name" value="Regulation of TNFR1 signaling"/>
</dbReference>
<dbReference type="Reactome" id="R-HSA-5357956">
    <property type="pathway name" value="TNFR1-induced NF-kappa-B signaling pathway"/>
</dbReference>
<dbReference type="Reactome" id="R-HSA-8854214">
    <property type="pathway name" value="TBC/RABGAPs"/>
</dbReference>
<dbReference type="Reactome" id="R-HSA-9013973">
    <property type="pathway name" value="TICAM1-dependent activation of IRF3/IRF7"/>
</dbReference>
<dbReference type="Reactome" id="R-HSA-936964">
    <property type="pathway name" value="Activation of IRF3, IRF7 mediated by TBK1, IKKEpsilon (IKBKE)"/>
</dbReference>
<dbReference type="Reactome" id="R-HSA-9824878">
    <property type="pathway name" value="Regulation of TBK1, IKKEpsilon (IKBKE)-mediated activation of IRF3, IRF7"/>
</dbReference>
<dbReference type="Reactome" id="R-HSA-9828211">
    <property type="pathway name" value="Regulation of TBK1, IKKEpsilon-mediated activation of IRF3, IRF7 upon TLR3 ligation"/>
</dbReference>
<dbReference type="SignaLink" id="Q96CV9"/>
<dbReference type="SIGNOR" id="Q96CV9"/>
<dbReference type="BioGRID-ORCS" id="10133">
    <property type="hits" value="17 hits in 1177 CRISPR screens"/>
</dbReference>
<dbReference type="ChiTaRS" id="OPTN">
    <property type="organism name" value="human"/>
</dbReference>
<dbReference type="EvolutionaryTrace" id="Q96CV9"/>
<dbReference type="GeneWiki" id="Optineurin"/>
<dbReference type="GenomeRNAi" id="10133"/>
<dbReference type="Pharos" id="Q96CV9">
    <property type="development level" value="Tbio"/>
</dbReference>
<dbReference type="PRO" id="PR:Q96CV9"/>
<dbReference type="Proteomes" id="UP000005640">
    <property type="component" value="Chromosome 10"/>
</dbReference>
<dbReference type="RNAct" id="Q96CV9">
    <property type="molecule type" value="protein"/>
</dbReference>
<dbReference type="Bgee" id="ENSG00000123240">
    <property type="expression patterns" value="Expressed in amniotic fluid and 209 other cell types or tissues"/>
</dbReference>
<dbReference type="ExpressionAtlas" id="Q96CV9">
    <property type="expression patterns" value="baseline and differential"/>
</dbReference>
<dbReference type="GO" id="GO:0005776">
    <property type="term" value="C:autophagosome"/>
    <property type="evidence" value="ECO:0007669"/>
    <property type="project" value="UniProtKB-SubCell"/>
</dbReference>
<dbReference type="GO" id="GO:0005737">
    <property type="term" value="C:cytoplasm"/>
    <property type="evidence" value="ECO:0000318"/>
    <property type="project" value="GO_Central"/>
</dbReference>
<dbReference type="GO" id="GO:0005829">
    <property type="term" value="C:cytosol"/>
    <property type="evidence" value="ECO:0000314"/>
    <property type="project" value="HPA"/>
</dbReference>
<dbReference type="GO" id="GO:0005794">
    <property type="term" value="C:Golgi apparatus"/>
    <property type="evidence" value="ECO:0000314"/>
    <property type="project" value="UniProtKB"/>
</dbReference>
<dbReference type="GO" id="GO:0000139">
    <property type="term" value="C:Golgi membrane"/>
    <property type="evidence" value="ECO:0000304"/>
    <property type="project" value="Reactome"/>
</dbReference>
<dbReference type="GO" id="GO:0005654">
    <property type="term" value="C:nucleoplasm"/>
    <property type="evidence" value="ECO:0000304"/>
    <property type="project" value="Reactome"/>
</dbReference>
<dbReference type="GO" id="GO:0005634">
    <property type="term" value="C:nucleus"/>
    <property type="evidence" value="ECO:0000318"/>
    <property type="project" value="GO_Central"/>
</dbReference>
<dbReference type="GO" id="GO:0048471">
    <property type="term" value="C:perinuclear region of cytoplasm"/>
    <property type="evidence" value="ECO:0007669"/>
    <property type="project" value="UniProtKB-SubCell"/>
</dbReference>
<dbReference type="GO" id="GO:0055038">
    <property type="term" value="C:recycling endosome membrane"/>
    <property type="evidence" value="ECO:0000304"/>
    <property type="project" value="Reactome"/>
</dbReference>
<dbReference type="GO" id="GO:0005802">
    <property type="term" value="C:trans-Golgi network"/>
    <property type="evidence" value="ECO:0000314"/>
    <property type="project" value="UniProtKB"/>
</dbReference>
<dbReference type="GO" id="GO:0042802">
    <property type="term" value="F:identical protein binding"/>
    <property type="evidence" value="ECO:0000353"/>
    <property type="project" value="IntAct"/>
</dbReference>
<dbReference type="GO" id="GO:0070530">
    <property type="term" value="F:K63-linked polyubiquitin modification-dependent protein binding"/>
    <property type="evidence" value="ECO:0000318"/>
    <property type="project" value="GO_Central"/>
</dbReference>
<dbReference type="GO" id="GO:0031593">
    <property type="term" value="F:polyubiquitin modification-dependent protein binding"/>
    <property type="evidence" value="ECO:0000314"/>
    <property type="project" value="UniProtKB"/>
</dbReference>
<dbReference type="GO" id="GO:0030674">
    <property type="term" value="F:protein-macromolecule adaptor activity"/>
    <property type="evidence" value="ECO:0000353"/>
    <property type="project" value="ParkinsonsUK-UCL"/>
</dbReference>
<dbReference type="GO" id="GO:0008270">
    <property type="term" value="F:zinc ion binding"/>
    <property type="evidence" value="ECO:0007669"/>
    <property type="project" value="UniProtKB-KW"/>
</dbReference>
<dbReference type="GO" id="GO:0008219">
    <property type="term" value="P:cell death"/>
    <property type="evidence" value="ECO:0000304"/>
    <property type="project" value="ProtInc"/>
</dbReference>
<dbReference type="GO" id="GO:0034620">
    <property type="term" value="P:cellular response to unfolded protein"/>
    <property type="evidence" value="ECO:0000315"/>
    <property type="project" value="UniProtKB"/>
</dbReference>
<dbReference type="GO" id="GO:0050829">
    <property type="term" value="P:defense response to Gram-negative bacterium"/>
    <property type="evidence" value="ECO:0000315"/>
    <property type="project" value="UniProtKB"/>
</dbReference>
<dbReference type="GO" id="GO:0007030">
    <property type="term" value="P:Golgi organization"/>
    <property type="evidence" value="ECO:0000315"/>
    <property type="project" value="UniProtKB"/>
</dbReference>
<dbReference type="GO" id="GO:0090161">
    <property type="term" value="P:Golgi ribbon formation"/>
    <property type="evidence" value="ECO:0000314"/>
    <property type="project" value="UniProtKB"/>
</dbReference>
<dbReference type="GO" id="GO:0043001">
    <property type="term" value="P:Golgi to plasma membrane protein transport"/>
    <property type="evidence" value="ECO:0000315"/>
    <property type="project" value="UniProtKB"/>
</dbReference>
<dbReference type="GO" id="GO:0045087">
    <property type="term" value="P:innate immune response"/>
    <property type="evidence" value="ECO:0007669"/>
    <property type="project" value="UniProtKB-KW"/>
</dbReference>
<dbReference type="GO" id="GO:0043124">
    <property type="term" value="P:negative regulation of canonical NF-kappaB signal transduction"/>
    <property type="evidence" value="ECO:0007669"/>
    <property type="project" value="Ensembl"/>
</dbReference>
<dbReference type="GO" id="GO:0001920">
    <property type="term" value="P:negative regulation of receptor recycling"/>
    <property type="evidence" value="ECO:0000315"/>
    <property type="project" value="UniProtKB"/>
</dbReference>
<dbReference type="GO" id="GO:0010508">
    <property type="term" value="P:positive regulation of autophagy"/>
    <property type="evidence" value="ECO:0000314"/>
    <property type="project" value="GO_Central"/>
</dbReference>
<dbReference type="GO" id="GO:1904417">
    <property type="term" value="P:positive regulation of xenophagy"/>
    <property type="evidence" value="ECO:0000315"/>
    <property type="project" value="ParkinsonsUK-UCL"/>
</dbReference>
<dbReference type="GO" id="GO:0034067">
    <property type="term" value="P:protein localization to Golgi apparatus"/>
    <property type="evidence" value="ECO:0000315"/>
    <property type="project" value="UniProtKB"/>
</dbReference>
<dbReference type="GO" id="GO:0043122">
    <property type="term" value="P:regulation of canonical NF-kappaB signal transduction"/>
    <property type="evidence" value="ECO:0000318"/>
    <property type="project" value="GO_Central"/>
</dbReference>
<dbReference type="GO" id="GO:0007165">
    <property type="term" value="P:signal transduction"/>
    <property type="evidence" value="ECO:0000304"/>
    <property type="project" value="ProtInc"/>
</dbReference>
<dbReference type="GO" id="GO:0061734">
    <property type="term" value="P:type 2 mitophagy"/>
    <property type="evidence" value="ECO:0000315"/>
    <property type="project" value="ParkinsonsUK-UCL"/>
</dbReference>
<dbReference type="CDD" id="cd09803">
    <property type="entry name" value="UBAN"/>
    <property type="match status" value="1"/>
</dbReference>
<dbReference type="FunFam" id="1.20.5.390:FF:000004">
    <property type="entry name" value="Optineurin"/>
    <property type="match status" value="1"/>
</dbReference>
<dbReference type="FunFam" id="1.20.5.390:FF:000007">
    <property type="entry name" value="Optineurin"/>
    <property type="match status" value="1"/>
</dbReference>
<dbReference type="FunFam" id="1.20.5.990:FF:000002">
    <property type="entry name" value="Optineurin"/>
    <property type="match status" value="1"/>
</dbReference>
<dbReference type="Gene3D" id="1.20.5.390">
    <property type="entry name" value="L1 transposable element, trimerization domain"/>
    <property type="match status" value="2"/>
</dbReference>
<dbReference type="Gene3D" id="1.20.5.990">
    <property type="entry name" value="Nemo cc2-lz domain - 1d5 darpin complex"/>
    <property type="match status" value="1"/>
</dbReference>
<dbReference type="IDEAL" id="IID00348"/>
<dbReference type="InterPro" id="IPR032419">
    <property type="entry name" value="CC2-LZ_dom"/>
</dbReference>
<dbReference type="InterPro" id="IPR021063">
    <property type="entry name" value="NEMO_N"/>
</dbReference>
<dbReference type="InterPro" id="IPR034735">
    <property type="entry name" value="NEMO_ZF"/>
</dbReference>
<dbReference type="InterPro" id="IPR051301">
    <property type="entry name" value="Optineurin/NFkB_EssMod"/>
</dbReference>
<dbReference type="PANTHER" id="PTHR31553">
    <property type="entry name" value="NF-KAPPA-B ESSENTIAL MODULATOR"/>
    <property type="match status" value="1"/>
</dbReference>
<dbReference type="PANTHER" id="PTHR31553:SF2">
    <property type="entry name" value="OPTINEURIN"/>
    <property type="match status" value="1"/>
</dbReference>
<dbReference type="Pfam" id="PF16516">
    <property type="entry name" value="CC2-LZ"/>
    <property type="match status" value="1"/>
</dbReference>
<dbReference type="Pfam" id="PF11577">
    <property type="entry name" value="NEMO"/>
    <property type="match status" value="1"/>
</dbReference>
<dbReference type="Pfam" id="PF18414">
    <property type="entry name" value="zf_C2H2_10"/>
    <property type="match status" value="1"/>
</dbReference>
<dbReference type="PROSITE" id="PS51801">
    <property type="entry name" value="ZF_CCHC_NOA"/>
    <property type="match status" value="1"/>
</dbReference>
<feature type="chain" id="PRO_0000058066" description="Optineurin">
    <location>
        <begin position="1"/>
        <end position="577"/>
    </location>
</feature>
<feature type="zinc finger region" description="CCHC NOA-type" evidence="2">
    <location>
        <begin position="547"/>
        <end position="577"/>
    </location>
</feature>
<feature type="region of interest" description="Disordered" evidence="3">
    <location>
        <begin position="1"/>
        <end position="32"/>
    </location>
</feature>
<feature type="region of interest" description="Interaction with Rab8">
    <location>
        <begin position="58"/>
        <end position="209"/>
    </location>
</feature>
<feature type="region of interest" description="Disordered" evidence="3">
    <location>
        <begin position="101"/>
        <end position="143"/>
    </location>
</feature>
<feature type="region of interest" description="Disordered" evidence="3">
    <location>
        <begin position="186"/>
        <end position="209"/>
    </location>
</feature>
<feature type="region of interest" description="Disordered" evidence="3">
    <location>
        <begin position="261"/>
        <end position="297"/>
    </location>
</feature>
<feature type="region of interest" description="Interaction with HD">
    <location>
        <begin position="411"/>
        <end position="577"/>
    </location>
</feature>
<feature type="region of interest" description="Interaction with MYO6" evidence="18">
    <location>
        <begin position="412"/>
        <end position="520"/>
    </location>
</feature>
<feature type="coiled-coil region" evidence="1">
    <location>
        <begin position="38"/>
        <end position="170"/>
    </location>
</feature>
<feature type="coiled-coil region" evidence="1">
    <location>
        <begin position="239"/>
        <end position="508"/>
    </location>
</feature>
<feature type="short sequence motif" description="LIR">
    <location>
        <begin position="176"/>
        <end position="181"/>
    </location>
</feature>
<feature type="short sequence motif" description="UBAN">
    <location>
        <begin position="474"/>
        <end position="479"/>
    </location>
</feature>
<feature type="compositionally biased region" description="Basic and acidic residues" evidence="3">
    <location>
        <begin position="186"/>
        <end position="197"/>
    </location>
</feature>
<feature type="compositionally biased region" description="Basic and acidic residues" evidence="3">
    <location>
        <begin position="261"/>
        <end position="274"/>
    </location>
</feature>
<feature type="compositionally biased region" description="Basic and acidic residues" evidence="3">
    <location>
        <begin position="281"/>
        <end position="292"/>
    </location>
</feature>
<feature type="binding site" evidence="2">
    <location>
        <position position="555"/>
    </location>
    <ligand>
        <name>Zn(2+)</name>
        <dbReference type="ChEBI" id="CHEBI:29105"/>
    </ligand>
</feature>
<feature type="binding site" evidence="2">
    <location>
        <position position="558"/>
    </location>
    <ligand>
        <name>Zn(2+)</name>
        <dbReference type="ChEBI" id="CHEBI:29105"/>
    </ligand>
</feature>
<feature type="binding site" evidence="2">
    <location>
        <position position="571"/>
    </location>
    <ligand>
        <name>Zn(2+)</name>
        <dbReference type="ChEBI" id="CHEBI:29105"/>
    </ligand>
</feature>
<feature type="binding site" evidence="2">
    <location>
        <position position="575"/>
    </location>
    <ligand>
        <name>Zn(2+)</name>
        <dbReference type="ChEBI" id="CHEBI:29105"/>
    </ligand>
</feature>
<feature type="modified residue" description="Phosphoserine; by TBK1" evidence="24 45 46">
    <location>
        <position position="177"/>
    </location>
</feature>
<feature type="modified residue" description="Phosphoserine" evidence="46">
    <location>
        <position position="198"/>
    </location>
</feature>
<feature type="modified residue" description="Phosphoserine" evidence="46">
    <location>
        <position position="342"/>
    </location>
</feature>
<feature type="modified residue" description="Phosphoserine" evidence="45">
    <location>
        <position position="526"/>
    </location>
</feature>
<feature type="splice variant" id="VSP_013261" description="In isoform 3." evidence="42">
    <location>
        <begin position="1"/>
        <end position="57"/>
    </location>
</feature>
<feature type="splice variant" id="VSP_013262" description="In isoform 2." evidence="41">
    <location>
        <begin position="210"/>
        <end position="215"/>
    </location>
</feature>
<feature type="sequence variant" id="VAR_021537" description="In GLC1E; dbSNP:rs200710076." evidence="13 15 17">
    <original>H</original>
    <variation>D</variation>
    <location>
        <position position="26"/>
    </location>
</feature>
<feature type="sequence variant" id="VAR_021538" description="In GLC1E; selectively promotes cell death of retinal ganglion cells probably by inducing TBC1D17-mediated inhibition of autophagy; affects Rab8-mediated endocytic trafficking; no effect on interaction with TBC1D17; increases colocalization with TBC1D17 and Rab8; increases interaction with TFRC and impairs its endocytic recycling; increases interactions with TBK1; decreases self-association; disturbs transition from the ER to Golgi; no effect on ubiquitin-binding; increases interaction with RAB8A as shown by immunoprecipitation in transfected HeLa cells, although other assays in yeast and mice show loss of direct interaction, it has been proposed that the variant might abolish direct interaction with Rab8 and enhance indirect interaction, hence altering the functional positioning of the molecules in the complex in such a way that it leads to constitutive or increased inactivation of Rab8 by TBC1D17; dbSNP:rs28939688." evidence="7 19 20 22 25 27 31">
    <original>E</original>
    <variation>K</variation>
    <location>
        <position position="50"/>
    </location>
</feature>
<feature type="sequence variant" id="VAR_021539" description="May modify intraocular pressure and increase risk of GLC1E and NPG; induces TFRC degradation leading to autophagic death in retinal ganglion cells; dbSNP:rs11258194." evidence="7 12 16 17 26">
    <original>M</original>
    <variation>K</variation>
    <location>
        <position position="98"/>
    </location>
</feature>
<feature type="sequence variant" id="VAR_021540" description="In GLC1E; dbSNP:rs1346865805." evidence="10">
    <original>E</original>
    <variation>D</variation>
    <location>
        <position position="103"/>
    </location>
</feature>
<feature type="sequence variant" id="VAR_021541" evidence="7 37 39">
    <original>P</original>
    <variation>S</variation>
    <location>
        <position position="201"/>
    </location>
</feature>
<feature type="sequence variant" id="VAR_021542" description="Requires 2 nucleotide substitutions." evidence="7 37 39">
    <original>K</original>
    <variation>H</variation>
    <location>
        <position position="213"/>
    </location>
</feature>
<feature type="sequence variant" id="VAR_021543" description="In dbSNP:rs750088207." evidence="7 37 39">
    <original>S</original>
    <variation>R</variation>
    <location>
        <position position="216"/>
    </location>
</feature>
<feature type="sequence variant" id="VAR_078108" description="In ALS12; no effect on Golgi subcellular location; no effect on protein expression level; increased Golgi fragmentation; decreased Golgi ribbon formation; increased susceptibility to endoplasmic reticulum (ER) stress; dbSNP:rs761558354." evidence="32">
    <original>V</original>
    <variation>F</variation>
    <location>
        <position position="295"/>
    </location>
</feature>
<feature type="sequence variant" id="VAR_030769" description="In dbSNP:rs7068431.">
    <original>S</original>
    <variation>P</variation>
    <location>
        <position position="308"/>
    </location>
</feature>
<feature type="sequence variant" id="VAR_021544" description="In dbSNP:rs523747.">
    <original>E</original>
    <variation>K</variation>
    <location>
        <position position="322"/>
    </location>
</feature>
<feature type="sequence variant" id="VAR_021545" evidence="7 37 39">
    <original>T</original>
    <variation>P</variation>
    <location>
        <position position="357"/>
    </location>
</feature>
<feature type="sequence variant" id="VAR_063597" description="In ALS12; dbSNP:rs267606929." evidence="23">
    <original>E</original>
    <variation>G</variation>
    <location>
        <position position="478"/>
    </location>
</feature>
<feature type="sequence variant" id="VAR_021546" description="In GLC1E; juvenile onset; dbSNP:rs373425395." evidence="10 14">
    <original>H</original>
    <variation>R</variation>
    <location>
        <position position="486"/>
    </location>
</feature>
<feature type="sequence variant" id="VAR_021547" description="In GLC1E; uncertain significance; dbSNP:rs75654767." evidence="7 11 17">
    <original>R</original>
    <variation>Q</variation>
    <location>
        <position position="545"/>
    </location>
</feature>
<feature type="mutagenesis site" description="No effect on retinal ganglion cell death, decreased interaction with TFRC, loss of localization to recycling endosomes, loss of ubiquitin-binding; when associated with N-474." evidence="20 31">
    <original>E</original>
    <variation>K</variation>
    <location>
        <position position="50"/>
    </location>
</feature>
<feature type="mutagenesis site" description="Abolishes interaction with MAP1LC3A and GABARAPL1, no effect on binding to linear ubiquitin." evidence="24 28">
    <original>F</original>
    <variation>A</variation>
    <location>
        <position position="178"/>
    </location>
</feature>
<feature type="mutagenesis site" description="Increases interaction with MAP1LC3B." evidence="24 28">
    <original>F</original>
    <variation>W</variation>
    <location>
        <position position="178"/>
    </location>
</feature>
<feature type="mutagenesis site" description="Abolishes colocalization with cytosolic Salmonella." evidence="24">
    <original>DF</original>
    <variation>NA</variation>
    <location>
        <begin position="474"/>
        <end position="475"/>
    </location>
</feature>
<feature type="mutagenesis site" description="No effect on retinal ganglion cell death, drastically decreased interaction with TFRC, loss of localization to recycling endosomes, loss of ubiquitin-binding; when associated with K-50." evidence="20 21 31">
    <original>D</original>
    <variation>N</variation>
    <location>
        <position position="474"/>
    </location>
</feature>
<feature type="mutagenesis site" description="Significant reduction in ubiquitin binding, decreased interaction with TBK1, loss of localization to recycling endosomes, disruption of interaction with TFRC, loss of inhibition of IFNB activation in response to TLR3 or RIG-I signaling, no effect on retinal ganglion cell death." evidence="20 21 31">
    <original>D</original>
    <variation>N</variation>
    <location>
        <position position="474"/>
    </location>
</feature>
<feature type="sequence conflict" description="In Ref. 8; AAC26850." evidence="43" ref="8">
    <original>A</original>
    <variation>V</variation>
    <location>
        <position position="436"/>
    </location>
</feature>
<feature type="turn" evidence="49">
    <location>
        <begin position="30"/>
        <end position="33"/>
    </location>
</feature>
<feature type="helix" evidence="49">
    <location>
        <begin position="37"/>
        <end position="98"/>
    </location>
</feature>
<feature type="strand" evidence="50">
    <location>
        <begin position="177"/>
        <end position="180"/>
    </location>
</feature>
<feature type="helix" evidence="51">
    <location>
        <begin position="420"/>
        <end position="503"/>
    </location>
</feature>
<feature type="turn" evidence="47">
    <location>
        <begin position="556"/>
        <end position="560"/>
    </location>
</feature>
<feature type="strand" evidence="48">
    <location>
        <begin position="561"/>
        <end position="564"/>
    </location>
</feature>
<feature type="helix" evidence="47">
    <location>
        <begin position="566"/>
        <end position="574"/>
    </location>
</feature>
<organism evidence="44">
    <name type="scientific">Homo sapiens</name>
    <name type="common">Human</name>
    <dbReference type="NCBI Taxonomy" id="9606"/>
    <lineage>
        <taxon>Eukaryota</taxon>
        <taxon>Metazoa</taxon>
        <taxon>Chordata</taxon>
        <taxon>Craniata</taxon>
        <taxon>Vertebrata</taxon>
        <taxon>Euteleostomi</taxon>
        <taxon>Mammalia</taxon>
        <taxon>Eutheria</taxon>
        <taxon>Euarchontoglires</taxon>
        <taxon>Primates</taxon>
        <taxon>Haplorrhini</taxon>
        <taxon>Catarrhini</taxon>
        <taxon>Hominidae</taxon>
        <taxon>Homo</taxon>
    </lineage>
</organism>
<sequence length="577" mass="65922">MSHQPLSCLTEKEDSPSESTGNGPPHLAHPNLDTFTPEELLQQMKELLTENHQLKEAMKLNNQAMKGRFEELSAWTEKQKEERQFFEIQSKEAKERLMALSHENEKLKEELGKLKGKSERSSEDPTDDSRLPRAEAEQEKDQLRTQVVRLQAEKADLLGIVSELQLKLNSSGSSEDSFVEIRMAEGEAEGSVKEIKHSPGPTRTVSTGTALSKYRSRSADGAKNYFEHEELTVSQLLLCLREGNQKVERLEVALKEAKERVSDFEKKTSNRSEIETQTEGSTEKENDEEKGPETVGSEVEALNLQVTSLFKELQEAHTKLSEAELMKKRLQEKCQALERKNSAIPSELNEKQELVYTNKKLELQVESMLSEIKMEQAKTEDEKSKLTVLQMTHNKLLQEHNNALKTIEELTRKESEKVDRAVLKELSEKLELAEKALASKQLQMDEMKQTIAKQEEDLETMTILRAQMEVYCSDFHAERAAREKIHEEKEQLALQLAVLLKENDAFEDGGRQSLMEMQSRHGARTSDSDQQAYLVQRGAEDRDWRQQRNIPIHSCPKCGEVLPDIDTLQIHVMDCII</sequence>
<proteinExistence type="evidence at protein level"/>
<keyword id="KW-0002">3D-structure</keyword>
<keyword id="KW-0025">Alternative splicing</keyword>
<keyword id="KW-0036">Amyotrophic lateral sclerosis</keyword>
<keyword id="KW-0072">Autophagy</keyword>
<keyword id="KW-0175">Coiled coil</keyword>
<keyword id="KW-0963">Cytoplasm</keyword>
<keyword id="KW-0968">Cytoplasmic vesicle</keyword>
<keyword id="KW-0225">Disease variant</keyword>
<keyword id="KW-0967">Endosome</keyword>
<keyword id="KW-0955">Glaucoma</keyword>
<keyword id="KW-0333">Golgi apparatus</keyword>
<keyword id="KW-0945">Host-virus interaction</keyword>
<keyword id="KW-0391">Immunity</keyword>
<keyword id="KW-0399">Innate immunity</keyword>
<keyword id="KW-0479">Metal-binding</keyword>
<keyword id="KW-0523">Neurodegeneration</keyword>
<keyword id="KW-0597">Phosphoprotein</keyword>
<keyword id="KW-1267">Proteomics identification</keyword>
<keyword id="KW-1185">Reference proteome</keyword>
<keyword id="KW-0862">Zinc</keyword>
<keyword id="KW-0863">Zinc-finger</keyword>
<reference key="1">
    <citation type="journal article" date="1998" name="Mol. Cell. Biol.">
        <title>Interaction of an adenovirus E3 14.7-kilodalton protein with a novel tumor necrosis factor alpha-inducible cellular protein containing leucine zipper domains.</title>
        <authorList>
            <person name="Li Y."/>
            <person name="Kang J."/>
            <person name="Horwitz M.S."/>
        </authorList>
    </citation>
    <scope>NUCLEOTIDE SEQUENCE [GENOMIC DNA / MRNA] (ISOFORMS 1 AND 3)</scope>
    <scope>VARIANTS SER-201; HIS-213; ARG-216 AND PRO-357</scope>
    <scope>SUBCELLULAR LOCATION</scope>
    <scope>TISSUE SPECIFICITY</scope>
    <scope>INDUCTION BY TNF</scope>
    <scope>INTERACTION WITH ADENOVIRUS E3</scope>
    <source>
        <tissue>Cervix carcinoma</tissue>
    </source>
</reference>
<reference key="2">
    <citation type="journal article" date="2002" name="Science">
        <title>Adult-onset primary open-angle glaucoma caused by mutations in optineurin.</title>
        <authorList>
            <person name="Rezaie T."/>
            <person name="Child A."/>
            <person name="Hitchings R."/>
            <person name="Brice G."/>
            <person name="Miller L."/>
            <person name="Coca-Prados M."/>
            <person name="Heon E."/>
            <person name="Krupin T."/>
            <person name="Ritch R."/>
            <person name="Kreutzer D."/>
            <person name="Crick R.P."/>
            <person name="Sarfarazi M."/>
        </authorList>
    </citation>
    <scope>NUCLEOTIDE SEQUENCE [MRNA] (ISOFORM 1)</scope>
    <scope>FUNCTION</scope>
    <scope>SUBCELLULAR LOCATION</scope>
    <scope>TISSUE SPECIFICITY</scope>
    <scope>VARIANTS GLC1E LYS-50 AND GLN-545</scope>
    <scope>VARIANTS LYS-98; SER-201; HIS-213; ARG-216 AND PRO-357</scope>
    <source>
        <tissue>Trabecular meshwork</tissue>
    </source>
</reference>
<reference key="3">
    <citation type="submission" date="2000-06" db="EMBL/GenBank/DDBJ databases">
        <title>Human FIP-2: genomic structure and mutational analysis in ARVD patients.</title>
        <authorList>
            <person name="Li D."/>
            <person name="Roberts R."/>
        </authorList>
    </citation>
    <scope>NUCLEOTIDE SEQUENCE [GENOMIC DNA]</scope>
    <scope>VARIANTS SER-201; HIS-213; ARG-216 AND PRO-357</scope>
</reference>
<reference key="4">
    <citation type="journal article" date="2004" name="Nat. Genet.">
        <title>Complete sequencing and characterization of 21,243 full-length human cDNAs.</title>
        <authorList>
            <person name="Ota T."/>
            <person name="Suzuki Y."/>
            <person name="Nishikawa T."/>
            <person name="Otsuki T."/>
            <person name="Sugiyama T."/>
            <person name="Irie R."/>
            <person name="Wakamatsu A."/>
            <person name="Hayashi K."/>
            <person name="Sato H."/>
            <person name="Nagai K."/>
            <person name="Kimura K."/>
            <person name="Makita H."/>
            <person name="Sekine M."/>
            <person name="Obayashi M."/>
            <person name="Nishi T."/>
            <person name="Shibahara T."/>
            <person name="Tanaka T."/>
            <person name="Ishii S."/>
            <person name="Yamamoto J."/>
            <person name="Saito K."/>
            <person name="Kawai Y."/>
            <person name="Isono Y."/>
            <person name="Nakamura Y."/>
            <person name="Nagahari K."/>
            <person name="Murakami K."/>
            <person name="Yasuda T."/>
            <person name="Iwayanagi T."/>
            <person name="Wagatsuma M."/>
            <person name="Shiratori A."/>
            <person name="Sudo H."/>
            <person name="Hosoiri T."/>
            <person name="Kaku Y."/>
            <person name="Kodaira H."/>
            <person name="Kondo H."/>
            <person name="Sugawara M."/>
            <person name="Takahashi M."/>
            <person name="Kanda K."/>
            <person name="Yokoi T."/>
            <person name="Furuya T."/>
            <person name="Kikkawa E."/>
            <person name="Omura Y."/>
            <person name="Abe K."/>
            <person name="Kamihara K."/>
            <person name="Katsuta N."/>
            <person name="Sato K."/>
            <person name="Tanikawa M."/>
            <person name="Yamazaki M."/>
            <person name="Ninomiya K."/>
            <person name="Ishibashi T."/>
            <person name="Yamashita H."/>
            <person name="Murakawa K."/>
            <person name="Fujimori K."/>
            <person name="Tanai H."/>
            <person name="Kimata M."/>
            <person name="Watanabe M."/>
            <person name="Hiraoka S."/>
            <person name="Chiba Y."/>
            <person name="Ishida S."/>
            <person name="Ono Y."/>
            <person name="Takiguchi S."/>
            <person name="Watanabe S."/>
            <person name="Yosida M."/>
            <person name="Hotuta T."/>
            <person name="Kusano J."/>
            <person name="Kanehori K."/>
            <person name="Takahashi-Fujii A."/>
            <person name="Hara H."/>
            <person name="Tanase T.-O."/>
            <person name="Nomura Y."/>
            <person name="Togiya S."/>
            <person name="Komai F."/>
            <person name="Hara R."/>
            <person name="Takeuchi K."/>
            <person name="Arita M."/>
            <person name="Imose N."/>
            <person name="Musashino K."/>
            <person name="Yuuki H."/>
            <person name="Oshima A."/>
            <person name="Sasaki N."/>
            <person name="Aotsuka S."/>
            <person name="Yoshikawa Y."/>
            <person name="Matsunawa H."/>
            <person name="Ichihara T."/>
            <person name="Shiohata N."/>
            <person name="Sano S."/>
            <person name="Moriya S."/>
            <person name="Momiyama H."/>
            <person name="Satoh N."/>
            <person name="Takami S."/>
            <person name="Terashima Y."/>
            <person name="Suzuki O."/>
            <person name="Nakagawa S."/>
            <person name="Senoh A."/>
            <person name="Mizoguchi H."/>
            <person name="Goto Y."/>
            <person name="Shimizu F."/>
            <person name="Wakebe H."/>
            <person name="Hishigaki H."/>
            <person name="Watanabe T."/>
            <person name="Sugiyama A."/>
            <person name="Takemoto M."/>
            <person name="Kawakami B."/>
            <person name="Yamazaki M."/>
            <person name="Watanabe K."/>
            <person name="Kumagai A."/>
            <person name="Itakura S."/>
            <person name="Fukuzumi Y."/>
            <person name="Fujimori Y."/>
            <person name="Komiyama M."/>
            <person name="Tashiro H."/>
            <person name="Tanigami A."/>
            <person name="Fujiwara T."/>
            <person name="Ono T."/>
            <person name="Yamada K."/>
            <person name="Fujii Y."/>
            <person name="Ozaki K."/>
            <person name="Hirao M."/>
            <person name="Ohmori Y."/>
            <person name="Kawabata A."/>
            <person name="Hikiji T."/>
            <person name="Kobatake N."/>
            <person name="Inagaki H."/>
            <person name="Ikema Y."/>
            <person name="Okamoto S."/>
            <person name="Okitani R."/>
            <person name="Kawakami T."/>
            <person name="Noguchi S."/>
            <person name="Itoh T."/>
            <person name="Shigeta K."/>
            <person name="Senba T."/>
            <person name="Matsumura K."/>
            <person name="Nakajima Y."/>
            <person name="Mizuno T."/>
            <person name="Morinaga M."/>
            <person name="Sasaki M."/>
            <person name="Togashi T."/>
            <person name="Oyama M."/>
            <person name="Hata H."/>
            <person name="Watanabe M."/>
            <person name="Komatsu T."/>
            <person name="Mizushima-Sugano J."/>
            <person name="Satoh T."/>
            <person name="Shirai Y."/>
            <person name="Takahashi Y."/>
            <person name="Nakagawa K."/>
            <person name="Okumura K."/>
            <person name="Nagase T."/>
            <person name="Nomura N."/>
            <person name="Kikuchi H."/>
            <person name="Masuho Y."/>
            <person name="Yamashita R."/>
            <person name="Nakai K."/>
            <person name="Yada T."/>
            <person name="Nakamura Y."/>
            <person name="Ohara O."/>
            <person name="Isogai T."/>
            <person name="Sugano S."/>
        </authorList>
    </citation>
    <scope>NUCLEOTIDE SEQUENCE [LARGE SCALE MRNA] (ISOFORM 1)</scope>
    <source>
        <tissue>Brain</tissue>
    </source>
</reference>
<reference key="5">
    <citation type="journal article" date="2004" name="Nature">
        <title>The DNA sequence and comparative analysis of human chromosome 10.</title>
        <authorList>
            <person name="Deloukas P."/>
            <person name="Earthrowl M.E."/>
            <person name="Grafham D.V."/>
            <person name="Rubenfield M."/>
            <person name="French L."/>
            <person name="Steward C.A."/>
            <person name="Sims S.K."/>
            <person name="Jones M.C."/>
            <person name="Searle S."/>
            <person name="Scott C."/>
            <person name="Howe K."/>
            <person name="Hunt S.E."/>
            <person name="Andrews T.D."/>
            <person name="Gilbert J.G.R."/>
            <person name="Swarbreck D."/>
            <person name="Ashurst J.L."/>
            <person name="Taylor A."/>
            <person name="Battles J."/>
            <person name="Bird C.P."/>
            <person name="Ainscough R."/>
            <person name="Almeida J.P."/>
            <person name="Ashwell R.I.S."/>
            <person name="Ambrose K.D."/>
            <person name="Babbage A.K."/>
            <person name="Bagguley C.L."/>
            <person name="Bailey J."/>
            <person name="Banerjee R."/>
            <person name="Bates K."/>
            <person name="Beasley H."/>
            <person name="Bray-Allen S."/>
            <person name="Brown A.J."/>
            <person name="Brown J.Y."/>
            <person name="Burford D.C."/>
            <person name="Burrill W."/>
            <person name="Burton J."/>
            <person name="Cahill P."/>
            <person name="Camire D."/>
            <person name="Carter N.P."/>
            <person name="Chapman J.C."/>
            <person name="Clark S.Y."/>
            <person name="Clarke G."/>
            <person name="Clee C.M."/>
            <person name="Clegg S."/>
            <person name="Corby N."/>
            <person name="Coulson A."/>
            <person name="Dhami P."/>
            <person name="Dutta I."/>
            <person name="Dunn M."/>
            <person name="Faulkner L."/>
            <person name="Frankish A."/>
            <person name="Frankland J.A."/>
            <person name="Garner P."/>
            <person name="Garnett J."/>
            <person name="Gribble S."/>
            <person name="Griffiths C."/>
            <person name="Grocock R."/>
            <person name="Gustafson E."/>
            <person name="Hammond S."/>
            <person name="Harley J.L."/>
            <person name="Hart E."/>
            <person name="Heath P.D."/>
            <person name="Ho T.P."/>
            <person name="Hopkins B."/>
            <person name="Horne J."/>
            <person name="Howden P.J."/>
            <person name="Huckle E."/>
            <person name="Hynds C."/>
            <person name="Johnson C."/>
            <person name="Johnson D."/>
            <person name="Kana A."/>
            <person name="Kay M."/>
            <person name="Kimberley A.M."/>
            <person name="Kershaw J.K."/>
            <person name="Kokkinaki M."/>
            <person name="Laird G.K."/>
            <person name="Lawlor S."/>
            <person name="Lee H.M."/>
            <person name="Leongamornlert D.A."/>
            <person name="Laird G."/>
            <person name="Lloyd C."/>
            <person name="Lloyd D.M."/>
            <person name="Loveland J."/>
            <person name="Lovell J."/>
            <person name="McLaren S."/>
            <person name="McLay K.E."/>
            <person name="McMurray A."/>
            <person name="Mashreghi-Mohammadi M."/>
            <person name="Matthews L."/>
            <person name="Milne S."/>
            <person name="Nickerson T."/>
            <person name="Nguyen M."/>
            <person name="Overton-Larty E."/>
            <person name="Palmer S.A."/>
            <person name="Pearce A.V."/>
            <person name="Peck A.I."/>
            <person name="Pelan S."/>
            <person name="Phillimore B."/>
            <person name="Porter K."/>
            <person name="Rice C.M."/>
            <person name="Rogosin A."/>
            <person name="Ross M.T."/>
            <person name="Sarafidou T."/>
            <person name="Sehra H.K."/>
            <person name="Shownkeen R."/>
            <person name="Skuce C.D."/>
            <person name="Smith M."/>
            <person name="Standring L."/>
            <person name="Sycamore N."/>
            <person name="Tester J."/>
            <person name="Thorpe A."/>
            <person name="Torcasso W."/>
            <person name="Tracey A."/>
            <person name="Tromans A."/>
            <person name="Tsolas J."/>
            <person name="Wall M."/>
            <person name="Walsh J."/>
            <person name="Wang H."/>
            <person name="Weinstock K."/>
            <person name="West A.P."/>
            <person name="Willey D.L."/>
            <person name="Whitehead S.L."/>
            <person name="Wilming L."/>
            <person name="Wray P.W."/>
            <person name="Young L."/>
            <person name="Chen Y."/>
            <person name="Lovering R.C."/>
            <person name="Moschonas N.K."/>
            <person name="Siebert R."/>
            <person name="Fechtel K."/>
            <person name="Bentley D."/>
            <person name="Durbin R.M."/>
            <person name="Hubbard T."/>
            <person name="Doucette-Stamm L."/>
            <person name="Beck S."/>
            <person name="Smith D.R."/>
            <person name="Rogers J."/>
        </authorList>
    </citation>
    <scope>NUCLEOTIDE SEQUENCE [LARGE SCALE GENOMIC DNA]</scope>
</reference>
<reference key="6">
    <citation type="submission" date="2005-09" db="EMBL/GenBank/DDBJ databases">
        <authorList>
            <person name="Mural R.J."/>
            <person name="Istrail S."/>
            <person name="Sutton G.G."/>
            <person name="Florea L."/>
            <person name="Halpern A.L."/>
            <person name="Mobarry C.M."/>
            <person name="Lippert R."/>
            <person name="Walenz B."/>
            <person name="Shatkay H."/>
            <person name="Dew I."/>
            <person name="Miller J.R."/>
            <person name="Flanigan M.J."/>
            <person name="Edwards N.J."/>
            <person name="Bolanos R."/>
            <person name="Fasulo D."/>
            <person name="Halldorsson B.V."/>
            <person name="Hannenhalli S."/>
            <person name="Turner R."/>
            <person name="Yooseph S."/>
            <person name="Lu F."/>
            <person name="Nusskern D.R."/>
            <person name="Shue B.C."/>
            <person name="Zheng X.H."/>
            <person name="Zhong F."/>
            <person name="Delcher A.L."/>
            <person name="Huson D.H."/>
            <person name="Kravitz S.A."/>
            <person name="Mouchard L."/>
            <person name="Reinert K."/>
            <person name="Remington K.A."/>
            <person name="Clark A.G."/>
            <person name="Waterman M.S."/>
            <person name="Eichler E.E."/>
            <person name="Adams M.D."/>
            <person name="Hunkapiller M.W."/>
            <person name="Myers E.W."/>
            <person name="Venter J.C."/>
        </authorList>
    </citation>
    <scope>NUCLEOTIDE SEQUENCE [LARGE SCALE GENOMIC DNA]</scope>
</reference>
<reference key="7">
    <citation type="journal article" date="2004" name="Genome Res.">
        <title>The status, quality, and expansion of the NIH full-length cDNA project: the Mammalian Gene Collection (MGC).</title>
        <authorList>
            <consortium name="The MGC Project Team"/>
        </authorList>
    </citation>
    <scope>NUCLEOTIDE SEQUENCE [LARGE SCALE MRNA] (ISOFORMS 1 AND 2)</scope>
    <source>
        <tissue>Cervix</tissue>
        <tissue>Skin</tissue>
    </source>
</reference>
<reference key="8">
    <citation type="journal article" date="1998" name="Hum. Mol. Genet.">
        <title>Huntingtin interacts with a family of WW domain proteins.</title>
        <authorList>
            <person name="Faber P.W."/>
            <person name="Barnes G.T."/>
            <person name="Srinidhi J."/>
            <person name="Chen J."/>
            <person name="Gusella J.F."/>
            <person name="MacDonald M.E."/>
        </authorList>
    </citation>
    <scope>NUCLEOTIDE SEQUENCE [MRNA] OF 412-555</scope>
    <scope>INTERACTION WITH HD</scope>
    <source>
        <tissue>Testis</tissue>
    </source>
</reference>
<reference key="9">
    <citation type="journal article" date="2000" name="Curr. Biol.">
        <title>FIP-2, a coiled-coil protein, links Huntingtin to Rab8 and modulates cellular morphogenesis.</title>
        <authorList>
            <person name="Hattula K."/>
            <person name="Peraenen J."/>
        </authorList>
    </citation>
    <scope>INTERACTION WITH HD AND RAB8</scope>
</reference>
<reference key="10">
    <citation type="journal article" date="2000" name="J. Biol. Chem.">
        <title>Phorbol esters and cytokines regulate the expression of the NEMO-related protein, a molecule involved in a NF-kappa B-independent pathway.</title>
        <authorList>
            <person name="Schwamborn K."/>
            <person name="Weil R."/>
            <person name="Courtois G."/>
            <person name="Whiteside S.T."/>
            <person name="Israeel A."/>
        </authorList>
    </citation>
    <scope>SUBCELLULAR LOCATION</scope>
    <scope>INDUCTION BY IFNG</scope>
    <scope>PHOSPHORYLATION</scope>
</reference>
<reference key="11">
    <citation type="journal article" date="2000" name="Nucleic Acids Res.">
        <title>Identification of a transcription factor IIIA-interacting protein.</title>
        <authorList>
            <person name="Moreland R.J."/>
            <person name="Dresser M.E."/>
            <person name="Rodgers J.S."/>
            <person name="Roe B.A."/>
            <person name="Conaway J.W."/>
            <person name="Conaway R.C."/>
            <person name="Hanas J.S."/>
        </authorList>
    </citation>
    <scope>INTERACTION WITH GTF3A</scope>
</reference>
<reference key="12">
    <citation type="journal article" date="2002" name="Biochem. Biophys. Res. Commun.">
        <title>Expression of optineurin, a glaucoma-linked gene, is influenced by elevated intraocular pressure.</title>
        <authorList>
            <person name="Vittitow J."/>
            <person name="Borras T."/>
        </authorList>
    </citation>
    <scope>INDUCTION BY INTRAOCULAR PRESSURE</scope>
    <scope>TISSUE SPECIFICITY</scope>
</reference>
<reference key="13">
    <citation type="journal article" date="2003" name="Ophthalmic Res.">
        <title>Optineurin gene expression level in human trabecular meshwork does not change in response to pressure elevation.</title>
        <authorList>
            <person name="Kamphuis W."/>
            <person name="Schneemann A."/>
        </authorList>
    </citation>
    <scope>INDUCTION BY INTRAOCULAR PRESSURE</scope>
    <scope>TISSUE SPECIFICITY</scope>
</reference>
<reference key="14">
    <citation type="journal article" date="2005" name="J. Cell Biol.">
        <title>Optineurin links myosin VI to the Golgi complex and is involved in Golgi organization and exocytosis.</title>
        <authorList>
            <person name="Sahlender D.A."/>
            <person name="Roberts R.C."/>
            <person name="Arden S.D."/>
            <person name="Spudich G."/>
            <person name="Taylor M.J."/>
            <person name="Luzio J.P."/>
            <person name="Kendrick-Jones J."/>
            <person name="Buss F."/>
        </authorList>
    </citation>
    <scope>FUNCTION</scope>
    <scope>SUBCELLULAR LOCATION</scope>
    <scope>INTERACTION WITH MYO6 AND RAB8</scope>
</reference>
<reference key="15">
    <citation type="journal article" date="2006" name="Nat. Biotechnol.">
        <title>A probability-based approach for high-throughput protein phosphorylation analysis and site localization.</title>
        <authorList>
            <person name="Beausoleil S.A."/>
            <person name="Villen J."/>
            <person name="Gerber S.A."/>
            <person name="Rush J."/>
            <person name="Gygi S.P."/>
        </authorList>
    </citation>
    <scope>IDENTIFICATION BY MASS SPECTROMETRY [LARGE SCALE ANALYSIS]</scope>
    <source>
        <tissue>Cervix carcinoma</tissue>
    </source>
</reference>
<reference key="16">
    <citation type="journal article" date="2008" name="Proc. Natl. Acad. Sci. U.S.A.">
        <title>A quantitative atlas of mitotic phosphorylation.</title>
        <authorList>
            <person name="Dephoure N."/>
            <person name="Zhou C."/>
            <person name="Villen J."/>
            <person name="Beausoleil S.A."/>
            <person name="Bakalarski C.E."/>
            <person name="Elledge S.J."/>
            <person name="Gygi S.P."/>
        </authorList>
    </citation>
    <scope>IDENTIFICATION BY MASS SPECTROMETRY [LARGE SCALE ANALYSIS]</scope>
    <source>
        <tissue>Cervix carcinoma</tissue>
    </source>
</reference>
<reference key="17">
    <citation type="journal article" date="2010" name="BMC Cell Biol.">
        <title>Regulation of endocytic trafficking of transferrin receptor by optineurin and its impairment by a glaucoma-associated mutant.</title>
        <authorList>
            <person name="Nagabhushana A."/>
            <person name="Chalasani M.L."/>
            <person name="Jain N."/>
            <person name="Radha V."/>
            <person name="Rangaraj N."/>
            <person name="Balasubramanian D."/>
            <person name="Swarup G."/>
        </authorList>
    </citation>
    <scope>FUNCTION</scope>
    <scope>SUBCELLULAR LOCATION</scope>
    <scope>INTERACTION WITH TFRC; UBIQUITIN AND RAB8A</scope>
    <scope>MUTAGENESIS OF GLU-50 AND ASP-474</scope>
    <scope>CHARACTERIZATION OF VARIANT GLC1E LYS-50</scope>
</reference>
<reference key="18">
    <citation type="journal article" date="2010" name="Hum. Mol. Genet.">
        <title>Overexpression of optineurin E50K disrupts Rab8 interaction and leads to a progressive retinal degeneration in mice.</title>
        <authorList>
            <person name="Chi Z.L."/>
            <person name="Akahori M."/>
            <person name="Obazawa M."/>
            <person name="Minami M."/>
            <person name="Noda T."/>
            <person name="Nakaya N."/>
            <person name="Tomarev S."/>
            <person name="Kawase K."/>
            <person name="Yamamoto T."/>
            <person name="Noda S."/>
            <person name="Sasaoka M."/>
            <person name="Shimazaki A."/>
            <person name="Takada Y."/>
            <person name="Iwata T."/>
        </authorList>
    </citation>
    <scope>CHARACTERIZATION OF VARIANT GLC1E LYS-50</scope>
</reference>
<reference key="19">
    <citation type="journal article" date="2010" name="PLoS Pathog.">
        <title>Optineurin negatively regulates the induction of IFNbeta in response to RNA virus infection.</title>
        <authorList>
            <person name="Mankouri J."/>
            <person name="Fragkoudis R."/>
            <person name="Richards K.H."/>
            <person name="Wetherill L.F."/>
            <person name="Harris M."/>
            <person name="Kohl A."/>
            <person name="Elliott R.M."/>
            <person name="Macdonald A."/>
        </authorList>
    </citation>
    <scope>FUNCTION</scope>
    <scope>SUBCELLULAR LOCATION</scope>
    <scope>INDUCTION</scope>
    <scope>INTERACTION WITH TBK1 AND TRAF3</scope>
    <scope>UBIQUITIN-BINDING MOTIF</scope>
    <scope>MUTAGENESIS OF ASP-474</scope>
</reference>
<reference key="20">
    <citation type="journal article" date="2010" name="Sci. Signal.">
        <title>Quantitative phosphoproteomics reveals widespread full phosphorylation site occupancy during mitosis.</title>
        <authorList>
            <person name="Olsen J.V."/>
            <person name="Vermeulen M."/>
            <person name="Santamaria A."/>
            <person name="Kumar C."/>
            <person name="Miller M.L."/>
            <person name="Jensen L.J."/>
            <person name="Gnad F."/>
            <person name="Cox J."/>
            <person name="Jensen T.S."/>
            <person name="Nigg E.A."/>
            <person name="Brunak S."/>
            <person name="Mann M."/>
        </authorList>
    </citation>
    <scope>IDENTIFICATION BY MASS SPECTROMETRY [LARGE SCALE ANALYSIS]</scope>
    <source>
        <tissue>Cervix carcinoma</tissue>
    </source>
</reference>
<reference key="21">
    <citation type="journal article" date="2011" name="Sci. Signal.">
        <title>System-wide temporal characterization of the proteome and phosphoproteome of human embryonic stem cell differentiation.</title>
        <authorList>
            <person name="Rigbolt K.T."/>
            <person name="Prokhorova T.A."/>
            <person name="Akimov V."/>
            <person name="Henningsen J."/>
            <person name="Johansen P.T."/>
            <person name="Kratchmarova I."/>
            <person name="Kassem M."/>
            <person name="Mann M."/>
            <person name="Olsen J.V."/>
            <person name="Blagoev B."/>
        </authorList>
    </citation>
    <scope>IDENTIFICATION BY MASS SPECTROMETRY [LARGE SCALE ANALYSIS]</scope>
</reference>
<reference key="22">
    <citation type="journal article" date="2012" name="J. Cell Sci.">
        <title>Optineurin mediates a negative regulation of Rab8 by the GTPase-activating protein TBC1D17.</title>
        <authorList>
            <person name="Vaibhava V."/>
            <person name="Nagabhushana A."/>
            <person name="Chalasani M.L."/>
            <person name="Sudhakar C."/>
            <person name="Kumari A."/>
            <person name="Swarup G."/>
        </authorList>
    </citation>
    <scope>FUNCTION</scope>
    <scope>SUBCELLULAR LOCATION</scope>
    <scope>INTERACTION WITH RAB8A AND TBC1D17</scope>
    <scope>CHARACTERIZATION OF VARIANT GLC1E LYS-50</scope>
</reference>
<reference key="23">
    <citation type="journal article" date="2012" name="Proc. Natl. Acad. Sci. U.S.A.">
        <title>N-terminal acetylome analyses and functional insights of the N-terminal acetyltransferase NatB.</title>
        <authorList>
            <person name="Van Damme P."/>
            <person name="Lasa M."/>
            <person name="Polevoda B."/>
            <person name="Gazquez C."/>
            <person name="Elosegui-Artola A."/>
            <person name="Kim D.S."/>
            <person name="De Juan-Pardo E."/>
            <person name="Demeyer K."/>
            <person name="Hole K."/>
            <person name="Larrea E."/>
            <person name="Timmerman E."/>
            <person name="Prieto J."/>
            <person name="Arnesen T."/>
            <person name="Sherman F."/>
            <person name="Gevaert K."/>
            <person name="Aldabe R."/>
        </authorList>
    </citation>
    <scope>IDENTIFICATION BY MASS SPECTROMETRY [LARGE SCALE ANALYSIS]</scope>
</reference>
<reference key="24">
    <citation type="journal article" date="2013" name="J. Cell Sci.">
        <title>The LIR motif - crucial for selective autophagy.</title>
        <authorList>
            <person name="Birgisdottir A.B."/>
            <person name="Lamark T."/>
            <person name="Johansen T."/>
        </authorList>
    </citation>
    <scope>LIR MOTIF</scope>
</reference>
<reference key="25">
    <citation type="journal article" date="2013" name="J. Proteome Res.">
        <title>Toward a comprehensive characterization of a human cancer cell phosphoproteome.</title>
        <authorList>
            <person name="Zhou H."/>
            <person name="Di Palma S."/>
            <person name="Preisinger C."/>
            <person name="Peng M."/>
            <person name="Polat A.N."/>
            <person name="Heck A.J."/>
            <person name="Mohammed S."/>
        </authorList>
    </citation>
    <scope>PHOSPHORYLATION [LARGE SCALE ANALYSIS] AT SER-177 AND SER-526</scope>
    <scope>IDENTIFICATION BY MASS SPECTROMETRY [LARGE SCALE ANALYSIS]</scope>
    <source>
        <tissue>Cervix carcinoma</tissue>
        <tissue>Erythroleukemia</tissue>
    </source>
</reference>
<reference key="26">
    <citation type="journal article" date="2014" name="Hum. Mol. Genet.">
        <title>The palmitoyl acyltransferase HIP14 shares a high proportion of interactors with huntingtin: implications for a role in the pathogenesis of Huntington's disease.</title>
        <authorList>
            <person name="Butland S.L."/>
            <person name="Sanders S.S."/>
            <person name="Schmidt M.E."/>
            <person name="Riechers S.P."/>
            <person name="Lin D.T."/>
            <person name="Martin D.D."/>
            <person name="Vaid K."/>
            <person name="Graham R.K."/>
            <person name="Singaraja R.R."/>
            <person name="Wanker E.E."/>
            <person name="Conibear E."/>
            <person name="Hayden M.R."/>
        </authorList>
    </citation>
    <scope>INTERACTION WITH ZDHHC17</scope>
</reference>
<reference key="27">
    <citation type="journal article" date="2014" name="J. Proteomics">
        <title>An enzyme assisted RP-RPLC approach for in-depth analysis of human liver phosphoproteome.</title>
        <authorList>
            <person name="Bian Y."/>
            <person name="Song C."/>
            <person name="Cheng K."/>
            <person name="Dong M."/>
            <person name="Wang F."/>
            <person name="Huang J."/>
            <person name="Sun D."/>
            <person name="Wang L."/>
            <person name="Ye M."/>
            <person name="Zou H."/>
        </authorList>
    </citation>
    <scope>PHOSPHORYLATION [LARGE SCALE ANALYSIS] AT SER-177; SER-198 AND SER-342</scope>
    <scope>IDENTIFICATION BY MASS SPECTROMETRY [LARGE SCALE ANALYSIS]</scope>
    <source>
        <tissue>Liver</tissue>
    </source>
</reference>
<reference key="28">
    <citation type="journal article" date="2016" name="BMC Biol.">
        <title>The Golgi apparatus acts as a platform for TBK1 activation after viral RNA sensing.</title>
        <authorList>
            <person name="Pourcelot M."/>
            <person name="Zemirli N."/>
            <person name="Silva Da Costa L."/>
            <person name="Loyant R."/>
            <person name="Garcin D."/>
            <person name="Vitour D."/>
            <person name="Munitic I."/>
            <person name="Vazquez A."/>
            <person name="Arnoult D."/>
        </authorList>
    </citation>
    <scope>FUNCTION</scope>
    <scope>SUBCELLULAR LOCATION</scope>
    <scope>INTERACTION WITH TBK1 AND BLUETONGUE VIRUS PROTEIN NS3</scope>
</reference>
<reference key="29">
    <citation type="journal article" date="2018" name="Nat. Commun.">
        <title>Deubiquitinase Usp12 functions noncatalytically to induce autophagy and confer neuroprotection in models of Huntington's disease.</title>
        <authorList>
            <person name="Aron R."/>
            <person name="Pellegrini P."/>
            <person name="Green E.W."/>
            <person name="Maddison D.C."/>
            <person name="Opoku-Nsiah K."/>
            <person name="Oliveira A.O."/>
            <person name="Wong J.S."/>
            <person name="Daub A.C."/>
            <person name="Giorgini F."/>
            <person name="Muchowski P."/>
            <person name="Finkbeiner S."/>
        </authorList>
    </citation>
    <scope>INTERACTION WITH USP12</scope>
</reference>
<reference key="30">
    <citation type="journal article" date="2013" name="Biochem. J.">
        <title>Structural basis for phosphorylation-triggered autophagic clearance of Salmonella.</title>
        <authorList>
            <person name="Rogov V.V."/>
            <person name="Suzuki H."/>
            <person name="Fiskin E."/>
            <person name="Wild P."/>
            <person name="Kniss A."/>
            <person name="Rozenknop A."/>
            <person name="Kato R."/>
            <person name="Kawasaki M."/>
            <person name="McEwan D.G."/>
            <person name="Lohr F."/>
            <person name="Guntert P."/>
            <person name="Dikic I."/>
            <person name="Wakatsuki S."/>
            <person name="Dotsch V."/>
        </authorList>
    </citation>
    <scope>X-RAY CRYSTALLOGRAPHY (1.7 ANGSTROMS) OF 170-181</scope>
    <scope>STRUCTURE BY NMR OF 169-185</scope>
    <scope>INTERACTION WITH MAP1LC3B</scope>
    <scope>MUTAGENESIS OF MUTAGENESIS OF PHE-178</scope>
</reference>
<reference key="31">
    <citation type="journal article" date="2003" name="J. Med. Genet.">
        <title>The M98K variant of the OPTINEURIN (OPTN) gene modifies initial intraocular pressure in patients with primary open angle glaucoma.</title>
        <authorList>
            <person name="Melki R."/>
            <person name="Belmouden A."/>
            <person name="Akhayat O."/>
            <person name="Brezin A."/>
            <person name="Garchon H.-J."/>
        </authorList>
    </citation>
    <scope>VARIANT LYS-98</scope>
</reference>
<reference key="32">
    <citation type="journal article" date="2003" name="Invest. Ophthalmol. Vis. Sci.">
        <title>Different optineurin mutation pattern in primary open-angle glaucoma.</title>
        <authorList>
            <person name="Leung Y.F."/>
            <person name="Fan B.J."/>
            <person name="Lam D.S.C."/>
            <person name="Lee W.S."/>
            <person name="Tam P.O.S."/>
            <person name="Chua J.K.H."/>
            <person name="Tham C.C.Y."/>
            <person name="Lai J.S.M."/>
            <person name="Fan D.S.P."/>
            <person name="Pang C.P."/>
        </authorList>
    </citation>
    <scope>VARIANTS GLC1E ASP-103 AND ARG-486</scope>
</reference>
<reference key="33">
    <citation type="journal article" date="2003" name="Am. J. Ophthalmol.">
        <title>Evaluation of optineurin sequence variations in 1,048 patients with open-angle glaucoma.</title>
        <authorList>
            <person name="Alward W.L.M."/>
            <person name="Kwon Y.H."/>
            <person name="Kawase K."/>
            <person name="Craig J.E."/>
            <person name="Hayreh S.S."/>
            <person name="Johnson A.T."/>
            <person name="Khanna C.L."/>
            <person name="Yamamoto T."/>
            <person name="Mackey D.A."/>
            <person name="Roos B.R."/>
            <person name="Affatigato L.M."/>
            <person name="Sheffield V.C."/>
            <person name="Stone E.M."/>
        </authorList>
    </citation>
    <scope>VARIANT GLC1E GLN-545</scope>
</reference>
<reference key="34">
    <citation type="journal article" date="2013" name="Autophagy">
        <title>M98K-OPTN induces transferrin receptor degradation and RAB12-mediated autophagic death in retinal ganglion cells.</title>
        <authorList>
            <person name="Sirohi K."/>
            <person name="Chalasani M.L."/>
            <person name="Sudhakar C."/>
            <person name="Kumari A."/>
            <person name="Radha V."/>
            <person name="Swarup G."/>
        </authorList>
    </citation>
    <scope>CHARACTERIZATION OF VARIANT LYS-98</scope>
    <scope>INTERACTION WITH RAB12</scope>
</reference>
<reference key="35">
    <citation type="journal article" date="2014" name="PLoS ONE">
        <title>E50K-OPTN-induced retinal cell death involves the Rab GTPase-activating protein, TBC1D17 mediated block in autophagy.</title>
        <authorList>
            <person name="Chalasani M.L."/>
            <person name="Kumari A."/>
            <person name="Radha V."/>
            <person name="Swarup G."/>
        </authorList>
    </citation>
    <scope>SUBCELLULAR LOCATION</scope>
    <scope>CHARACTERIZATION OF VARIANT GLC1E LYS-50</scope>
    <scope>MUTAGENESIS OF GLU-50 AND ASP-474</scope>
</reference>
<reference key="36">
    <citation type="journal article" date="2013" name="Hum. Mol. Genet.">
        <title>Enhanced optineurin E50K-TBK1 interaction evokes protein insolubility and initiates familial primary open-angle glaucoma.</title>
        <authorList>
            <person name="Minegishi Y."/>
            <person name="Iejima D."/>
            <person name="Kobayashi H."/>
            <person name="Chi Z.L."/>
            <person name="Kawase K."/>
            <person name="Yamamoto T."/>
            <person name="Seki T."/>
            <person name="Yuasa S."/>
            <person name="Fukuda K."/>
            <person name="Iwata T."/>
        </authorList>
    </citation>
    <scope>SELF-ASSOCIATION</scope>
    <scope>SUBCELLULAR LOCATION</scope>
    <scope>INTERACTION WITH TBK1</scope>
    <scope>CHARACTERIZATION OF VARIANT GLC1E LYS-50</scope>
</reference>
<reference key="37">
    <citation type="journal article" date="2004" name="Clin. Exp. Ophthalmol.">
        <title>Analysis of optineurin (OPTN) gene mutations in subjects with and without glaucoma: the blue mountains eye study.</title>
        <authorList>
            <person name="Baird P.N."/>
            <person name="Richardson A.J."/>
            <person name="Craig J.E."/>
            <person name="Mackey D.A."/>
            <person name="Rochtchina E."/>
            <person name="Mitchell P."/>
        </authorList>
    </citation>
    <scope>VARIANT LYS-98</scope>
</reference>
<reference key="38">
    <citation type="journal article" date="2004" name="Invest. Ophthalmol. Vis. Sci.">
        <title>Defining the pathogenicity of optineurin in juvenile open-angle glaucoma.</title>
        <authorList>
            <person name="Willoughby C.E."/>
            <person name="Chan L.L.Y."/>
            <person name="Herd S."/>
            <person name="Billingsley G."/>
            <person name="Noordeh N."/>
            <person name="Levin A.V."/>
            <person name="Buys Y."/>
            <person name="Trope G."/>
            <person name="Sarfarazi M."/>
            <person name="Heon E."/>
        </authorList>
    </citation>
    <scope>VARIANT GLC1E ARG-486</scope>
</reference>
<reference key="39">
    <citation type="journal article" date="2004" name="Invest. Ophthalmol. Vis. Sci.">
        <title>Variants in optineurin gene and their association with tumor necrosis factor-alpha polymorphisms in Japanese patients with glaucoma.</title>
        <authorList>
            <person name="Funayama T."/>
            <person name="Ishikawa K."/>
            <person name="Ohtake Y."/>
            <person name="Tanino T."/>
            <person name="Kurosaka D."/>
            <person name="Kimura I."/>
            <person name="Suzuki K."/>
            <person name="Ideta H."/>
            <person name="Nakamoto K."/>
            <person name="Yasuda N."/>
            <person name="Fujimaki T."/>
            <person name="Murakami A."/>
            <person name="Asaoka R."/>
            <person name="Hotta Y."/>
            <person name="Tanihara H."/>
            <person name="Kanamoto T."/>
            <person name="Mishima H."/>
            <person name="Fukuchi T."/>
            <person name="Abe H."/>
            <person name="Iwata T."/>
            <person name="Shimada N."/>
            <person name="Kudoh J."/>
            <person name="Shimizu N."/>
            <person name="Mashima Y."/>
        </authorList>
    </citation>
    <scope>VARIANTS GLC1E ASP-26 AND GLN-545</scope>
    <scope>VARIANT LYS-98</scope>
</reference>
<reference key="40">
    <citation type="journal article" date="2004" name="J. Glaucoma">
        <title>Molecular genetic analysis of optineurin gene for primary open-angle and normal tension glaucoma in the Japanese population.</title>
        <authorList>
            <person name="Fuse N."/>
            <person name="Takahashi K."/>
            <person name="Akiyama H."/>
            <person name="Nakazawa T."/>
            <person name="Seimiya M."/>
            <person name="Kuwahara S."/>
            <person name="Tamai M."/>
        </authorList>
    </citation>
    <scope>VARIANT GLC1E ASP-26</scope>
</reference>
<reference key="41">
    <citation type="journal article" date="2004" name="Ophthalmic Genet.">
        <title>Clinical relevance of optineurin sequence alterations in Japanese glaucoma patients.</title>
        <authorList>
            <person name="Umeda T."/>
            <person name="Matsuo T."/>
            <person name="Nagayama M."/>
            <person name="Tamura N."/>
            <person name="Tanabe Y."/>
            <person name="Ohtsuki H."/>
        </authorList>
    </citation>
    <scope>VARIANT NPG ASP-26</scope>
</reference>
<reference key="42">
    <citation type="journal article" date="2007" name="Invest. Ophthalmol. Vis. Sci.">
        <title>A glaucoma-associated mutant of optineurin selectively induces death of retinal ganglion cells which is inhibited by antioxidants.</title>
        <authorList>
            <person name="Chalasani M.L."/>
            <person name="Radha V."/>
            <person name="Gupta V."/>
            <person name="Agarwal N."/>
            <person name="Balasubramanian D."/>
            <person name="Swarup G."/>
        </authorList>
    </citation>
    <scope>CHARACTERIZATION OF VARIANT GLC1E LYS-50</scope>
</reference>
<reference key="43">
    <citation type="journal article" date="2010" name="Nature">
        <title>Mutations of optineurin in amyotrophic lateral sclerosis.</title>
        <authorList>
            <person name="Maruyama H."/>
            <person name="Morino H."/>
            <person name="Ito H."/>
            <person name="Izumi Y."/>
            <person name="Kato H."/>
            <person name="Watanabe Y."/>
            <person name="Kinoshita Y."/>
            <person name="Kamada M."/>
            <person name="Nodera H."/>
            <person name="Suzuki H."/>
            <person name="Komure O."/>
            <person name="Matsuura S."/>
            <person name="Kobatake K."/>
            <person name="Morimoto N."/>
            <person name="Abe K."/>
            <person name="Suzuki N."/>
            <person name="Aoki M."/>
            <person name="Kawata A."/>
            <person name="Hirai T."/>
            <person name="Kato T."/>
            <person name="Ogasawara K."/>
            <person name="Hirano A."/>
            <person name="Takumi T."/>
            <person name="Kusaka H."/>
            <person name="Hagiwara K."/>
            <person name="Kaji R."/>
            <person name="Kawakami H."/>
        </authorList>
    </citation>
    <scope>VARIANT ALS12 GLY-478</scope>
    <scope>SUBCELLULAR LOCATION</scope>
</reference>
<reference key="44">
    <citation type="journal article" date="2011" name="Science">
        <title>Phosphorylation of the autophagy receptor optineurin restricts Salmonella growth.</title>
        <authorList>
            <person name="Wild P."/>
            <person name="Farhan H."/>
            <person name="McEwan D.G."/>
            <person name="Wagner S."/>
            <person name="Rogov V.V."/>
            <person name="Brady N.R."/>
            <person name="Richter B."/>
            <person name="Korac J."/>
            <person name="Waidmann O."/>
            <person name="Choudhary C."/>
            <person name="Dotsch V."/>
            <person name="Bumann D."/>
            <person name="Dikic I."/>
        </authorList>
    </citation>
    <scope>FUNCTION</scope>
    <scope>SUBCELLULAR LOCATION</scope>
    <scope>INTERACTION WITH MAP1LC3A; MAP1LC3B; GABARAP; GABARAPL1 AND GABARAPL2</scope>
    <scope>PHOSPHORYLATION AT SER-177 BY TBK1</scope>
    <scope>UBIQUITIN-BINDING</scope>
    <scope>MUTAGENESIS OF PHE-178 AND 474-ASP-PHE-475</scope>
</reference>
<reference key="45">
    <citation type="journal article" date="2019" name="Nat. Commun.">
        <title>Structure of Myosin VI/Tom1 complex reveals a cargo recognition mode of Myosin VI for tethering.</title>
        <authorList>
            <person name="Hu S."/>
            <person name="Guo Y."/>
            <person name="Wang Y."/>
            <person name="Li Y."/>
            <person name="Fu T."/>
            <person name="Zhou Z."/>
            <person name="Wang Y."/>
            <person name="Liu J."/>
            <person name="Pan L."/>
        </authorList>
    </citation>
    <scope>INTERACTION WITH TOM1 AND MYO6</scope>
</reference>
<reference key="46">
    <citation type="journal article" date="2020" name="Brain">
        <title>CYLD is a causative gene for frontotemporal dementia - amyotrophic lateral sclerosis.</title>
        <authorList>
            <person name="Dobson-Stone C."/>
            <person name="Hallupp M."/>
            <person name="Shahheydari H."/>
            <person name="Ragagnin A.M.G."/>
            <person name="Chatterton Z."/>
            <person name="Carew-Jones F."/>
            <person name="Shepherd C.E."/>
            <person name="Stefen H."/>
            <person name="Paric E."/>
            <person name="Fath T."/>
            <person name="Thompson E.M."/>
            <person name="Blumbergs P."/>
            <person name="Short C.L."/>
            <person name="Field C.D."/>
            <person name="Panegyres P.K."/>
            <person name="Hecker J."/>
            <person name="Nicholson G."/>
            <person name="Shaw A.D."/>
            <person name="Fullerton J.M."/>
            <person name="Luty A.A."/>
            <person name="Schofield P.R."/>
            <person name="Brooks W.S."/>
            <person name="Rajan N."/>
            <person name="Bennett M.F."/>
            <person name="Bahlo M."/>
            <person name="Landers J.E."/>
            <person name="Piguet O."/>
            <person name="Hodges J.R."/>
            <person name="Halliday G.M."/>
            <person name="Topp S.D."/>
            <person name="Smith B.N."/>
            <person name="Shaw C.E."/>
            <person name="McCann E."/>
            <person name="Fifita J.A."/>
            <person name="Williams K.L."/>
            <person name="Atkin J.D."/>
            <person name="Blair I.P."/>
            <person name="Kwok J.B."/>
        </authorList>
    </citation>
    <scope>INTERACTION WITH CYLD</scope>
</reference>
<reference key="47">
    <citation type="journal article" date="2017" name="Amyotroph. Lateral Scler. Frontotemporal Degener.">
        <title>A novel amyotrophic lateral sclerosis mutation in OPTN induces ER stress and Golgi fragmentation in vitro.</title>
        <authorList>
            <person name="Fifita J.A."/>
            <person name="Williams K.L."/>
            <person name="Sundaramoorthy V."/>
            <person name="Mccann E.P."/>
            <person name="Nicholson G.A."/>
            <person name="Atkin J.D."/>
            <person name="Blair I.P."/>
        </authorList>
    </citation>
    <scope>VARIANT ALS12 PHE-295</scope>
    <scope>CHARACTERIZATION OF VARIANT ALS12 PHE-295</scope>
    <scope>FUNCTION</scope>
    <scope>SUBCELLULAR LOCATION</scope>
</reference>
<protein>
    <recommendedName>
        <fullName>Optineurin</fullName>
    </recommendedName>
    <alternativeName>
        <fullName evidence="42">E3-14.7K-interacting protein</fullName>
        <shortName evidence="42">FIP-2</shortName>
    </alternativeName>
    <alternativeName>
        <fullName>Huntingtin yeast partner L</fullName>
    </alternativeName>
    <alternativeName>
        <fullName>Huntingtin-interacting protein 7</fullName>
        <shortName>HIP-7</shortName>
    </alternativeName>
    <alternativeName>
        <fullName>Huntingtin-interacting protein L</fullName>
    </alternativeName>
    <alternativeName>
        <fullName evidence="40">NEMO-related protein</fullName>
    </alternativeName>
    <alternativeName>
        <fullName>Optic neuropathy-inducing protein</fullName>
    </alternativeName>
    <alternativeName>
        <fullName>Transcription factor IIIA-interacting protein</fullName>
        <shortName>TFIIIA-IntP</shortName>
    </alternativeName>
</protein>
<accession>Q96CV9</accession>
<accession>B3KP00</accession>
<accession>D3DRS4</accession>
<accession>D3DRS8</accession>
<accession>Q5T672</accession>
<accession>Q5T673</accession>
<accession>Q5T674</accession>
<accession>Q5T675</accession>
<accession>Q7LDL9</accession>
<accession>Q8N562</accession>
<accession>Q9UET9</accession>
<accession>Q9UEV4</accession>
<accession>Q9Y218</accession>